<dbReference type="EMBL" id="AF032886">
    <property type="protein sequence ID" value="AAC39592.1"/>
    <property type="molecule type" value="mRNA"/>
</dbReference>
<dbReference type="EMBL" id="AK301304">
    <property type="protein sequence ID" value="BAG62858.1"/>
    <property type="molecule type" value="mRNA"/>
</dbReference>
<dbReference type="EMBL" id="AL096818">
    <property type="status" value="NOT_ANNOTATED_CDS"/>
    <property type="molecule type" value="Genomic_DNA"/>
</dbReference>
<dbReference type="EMBL" id="AL391646">
    <property type="status" value="NOT_ANNOTATED_CDS"/>
    <property type="molecule type" value="Genomic_DNA"/>
</dbReference>
<dbReference type="EMBL" id="AL365509">
    <property type="status" value="NOT_ANNOTATED_CDS"/>
    <property type="molecule type" value="Genomic_DNA"/>
</dbReference>
<dbReference type="EMBL" id="CH471051">
    <property type="protein sequence ID" value="EAW48373.1"/>
    <property type="molecule type" value="Genomic_DNA"/>
</dbReference>
<dbReference type="EMBL" id="CH471051">
    <property type="protein sequence ID" value="EAW48374.1"/>
    <property type="molecule type" value="Genomic_DNA"/>
</dbReference>
<dbReference type="EMBL" id="BC020227">
    <property type="protein sequence ID" value="AAH20227.1"/>
    <property type="molecule type" value="mRNA"/>
</dbReference>
<dbReference type="EMBL" id="BC021224">
    <property type="protein sequence ID" value="AAH21224.1"/>
    <property type="molecule type" value="mRNA"/>
</dbReference>
<dbReference type="EMBL" id="BC068552">
    <property type="protein sequence ID" value="AAH68552.1"/>
    <property type="molecule type" value="mRNA"/>
</dbReference>
<dbReference type="EMBL" id="AJ001589">
    <property type="protein sequence ID" value="CAA04860.1"/>
    <property type="molecule type" value="mRNA"/>
</dbReference>
<dbReference type="EMBL" id="AJ001590">
    <property type="protein sequence ID" value="CAA04861.1"/>
    <property type="molecule type" value="Genomic_DNA"/>
</dbReference>
<dbReference type="CCDS" id="CCDS5068.1">
    <molecule id="O43524-1"/>
</dbReference>
<dbReference type="RefSeq" id="NP_001402073.1">
    <molecule id="O43524-2"/>
    <property type="nucleotide sequence ID" value="NM_001415144.1"/>
</dbReference>
<dbReference type="RefSeq" id="NP_001402074.1">
    <molecule id="O43524-2"/>
    <property type="nucleotide sequence ID" value="NM_001415145.1"/>
</dbReference>
<dbReference type="RefSeq" id="NP_001402075.1">
    <molecule id="O43524-2"/>
    <property type="nucleotide sequence ID" value="NM_001415146.1"/>
</dbReference>
<dbReference type="RefSeq" id="NP_001402076.1">
    <molecule id="O43524-2"/>
    <property type="nucleotide sequence ID" value="NM_001415147.1"/>
</dbReference>
<dbReference type="RefSeq" id="NP_001402077.1">
    <molecule id="O43524-2"/>
    <property type="nucleotide sequence ID" value="NM_001415148.1"/>
</dbReference>
<dbReference type="RefSeq" id="NP_001402078.1">
    <molecule id="O43524-2"/>
    <property type="nucleotide sequence ID" value="NM_001415149.1"/>
</dbReference>
<dbReference type="RefSeq" id="NP_001446.1">
    <molecule id="O43524-1"/>
    <property type="nucleotide sequence ID" value="NM_001455.4"/>
</dbReference>
<dbReference type="RefSeq" id="NP_963853.1">
    <molecule id="O43524-1"/>
    <property type="nucleotide sequence ID" value="NM_201559.3"/>
</dbReference>
<dbReference type="RefSeq" id="XP_005266925.1">
    <property type="nucleotide sequence ID" value="XM_005266868.3"/>
</dbReference>
<dbReference type="RefSeq" id="XP_011533930.1">
    <property type="nucleotide sequence ID" value="XM_011535628.2"/>
</dbReference>
<dbReference type="RefSeq" id="XP_011533931.1">
    <property type="nucleotide sequence ID" value="XM_011535629.2"/>
</dbReference>
<dbReference type="RefSeq" id="XP_016866075.1">
    <molecule id="O43524-2"/>
    <property type="nucleotide sequence ID" value="XM_017010586.2"/>
</dbReference>
<dbReference type="PDB" id="2K86">
    <property type="method" value="NMR"/>
    <property type="chains" value="A=151-251"/>
</dbReference>
<dbReference type="PDB" id="2LQH">
    <property type="method" value="NMR"/>
    <property type="chains" value="B=461-483"/>
</dbReference>
<dbReference type="PDB" id="2LQI">
    <property type="method" value="NMR"/>
    <property type="chains" value="B=461-483"/>
</dbReference>
<dbReference type="PDB" id="2UZK">
    <property type="method" value="X-ray"/>
    <property type="resolution" value="2.70 A"/>
    <property type="chains" value="A/C=158-253"/>
</dbReference>
<dbReference type="PDB" id="6MNL">
    <property type="method" value="NMR"/>
    <property type="chains" value="A=237-252"/>
</dbReference>
<dbReference type="PDB" id="7V9B">
    <property type="method" value="X-ray"/>
    <property type="resolution" value="1.85 A"/>
    <property type="chains" value="B=248-258"/>
</dbReference>
<dbReference type="PDBsum" id="2K86"/>
<dbReference type="PDBsum" id="2LQH"/>
<dbReference type="PDBsum" id="2LQI"/>
<dbReference type="PDBsum" id="2UZK"/>
<dbReference type="PDBsum" id="6MNL"/>
<dbReference type="PDBsum" id="7V9B"/>
<dbReference type="BMRB" id="O43524"/>
<dbReference type="SMR" id="O43524"/>
<dbReference type="BioGRID" id="108598">
    <property type="interactions" value="88"/>
</dbReference>
<dbReference type="ComplexPortal" id="CPX-1123">
    <property type="entry name" value="FOXO3-MYC complex"/>
</dbReference>
<dbReference type="ComplexPortal" id="CPX-1147">
    <property type="entry name" value="FOXO3-YWHAZ complex"/>
</dbReference>
<dbReference type="CORUM" id="O43524"/>
<dbReference type="DIP" id="DIP-29723N"/>
<dbReference type="FunCoup" id="O43524">
    <property type="interactions" value="3133"/>
</dbReference>
<dbReference type="IntAct" id="O43524">
    <property type="interactions" value="54"/>
</dbReference>
<dbReference type="MINT" id="O43524"/>
<dbReference type="STRING" id="9606.ENSP00000339527"/>
<dbReference type="BindingDB" id="O43524"/>
<dbReference type="ChEMBL" id="CHEMBL5778"/>
<dbReference type="GlyConnect" id="1253">
    <property type="glycosylation" value="1 N-Linked glycan (1 site)"/>
</dbReference>
<dbReference type="GlyCosmos" id="O43524">
    <property type="glycosylation" value="9 sites, 2 glycans"/>
</dbReference>
<dbReference type="GlyGen" id="O43524">
    <property type="glycosylation" value="13 sites, 1 N-linked glycan (1 site), 1 O-linked glycan (10 sites)"/>
</dbReference>
<dbReference type="iPTMnet" id="O43524"/>
<dbReference type="PhosphoSitePlus" id="O43524"/>
<dbReference type="BioMuta" id="FOXO3"/>
<dbReference type="CPTAC" id="CPTAC-5836"/>
<dbReference type="CPTAC" id="non-CPTAC-5392"/>
<dbReference type="CPTAC" id="non-CPTAC-5394"/>
<dbReference type="CPTAC" id="non-CPTAC-5739"/>
<dbReference type="CPTAC" id="non-CPTAC-5740"/>
<dbReference type="jPOST" id="O43524"/>
<dbReference type="MassIVE" id="O43524"/>
<dbReference type="PaxDb" id="9606-ENSP00000385824"/>
<dbReference type="PeptideAtlas" id="O43524"/>
<dbReference type="ProteomicsDB" id="49029">
    <molecule id="O43524-1"/>
</dbReference>
<dbReference type="ProteomicsDB" id="5304"/>
<dbReference type="Pumba" id="O43524"/>
<dbReference type="Antibodypedia" id="3419">
    <property type="antibodies" value="1239 antibodies from 48 providers"/>
</dbReference>
<dbReference type="CPTC" id="O43524">
    <property type="antibodies" value="3 antibodies"/>
</dbReference>
<dbReference type="DNASU" id="2309"/>
<dbReference type="Ensembl" id="ENST00000343882.10">
    <molecule id="O43524-1"/>
    <property type="protein sequence ID" value="ENSP00000339527.6"/>
    <property type="gene ID" value="ENSG00000118689.15"/>
</dbReference>
<dbReference type="Ensembl" id="ENST00000406360.2">
    <molecule id="O43524-1"/>
    <property type="protein sequence ID" value="ENSP00000385824.1"/>
    <property type="gene ID" value="ENSG00000118689.15"/>
</dbReference>
<dbReference type="Ensembl" id="ENST00000540898.1">
    <molecule id="O43524-2"/>
    <property type="protein sequence ID" value="ENSP00000446316.1"/>
    <property type="gene ID" value="ENSG00000118689.15"/>
</dbReference>
<dbReference type="GeneID" id="2309"/>
<dbReference type="KEGG" id="hsa:2309"/>
<dbReference type="MANE-Select" id="ENST00000406360.2">
    <property type="protein sequence ID" value="ENSP00000385824.1"/>
    <property type="RefSeq nucleotide sequence ID" value="NM_001455.4"/>
    <property type="RefSeq protein sequence ID" value="NP_001446.1"/>
</dbReference>
<dbReference type="UCSC" id="uc003psk.3">
    <molecule id="O43524-1"/>
    <property type="organism name" value="human"/>
</dbReference>
<dbReference type="AGR" id="HGNC:3821"/>
<dbReference type="CTD" id="2309"/>
<dbReference type="DisGeNET" id="2309"/>
<dbReference type="GeneCards" id="FOXO3"/>
<dbReference type="HGNC" id="HGNC:3821">
    <property type="gene designation" value="FOXO3"/>
</dbReference>
<dbReference type="HPA" id="ENSG00000118689">
    <property type="expression patterns" value="Low tissue specificity"/>
</dbReference>
<dbReference type="MalaCards" id="FOXO3"/>
<dbReference type="MIM" id="602681">
    <property type="type" value="gene"/>
</dbReference>
<dbReference type="neXtProt" id="NX_O43524"/>
<dbReference type="OpenTargets" id="ENSG00000118689"/>
<dbReference type="PharmGKB" id="PA28239"/>
<dbReference type="VEuPathDB" id="HostDB:ENSG00000118689"/>
<dbReference type="eggNOG" id="KOG2294">
    <property type="taxonomic scope" value="Eukaryota"/>
</dbReference>
<dbReference type="GeneTree" id="ENSGT00940000159826"/>
<dbReference type="HOGENOM" id="CLU_023456_1_0_1"/>
<dbReference type="InParanoid" id="O43524"/>
<dbReference type="OMA" id="TGGMMQR"/>
<dbReference type="OrthoDB" id="5954824at2759"/>
<dbReference type="PAN-GO" id="O43524">
    <property type="GO annotations" value="5 GO annotations based on evolutionary models"/>
</dbReference>
<dbReference type="PhylomeDB" id="O43524"/>
<dbReference type="TreeFam" id="TF315583"/>
<dbReference type="PathwayCommons" id="O43524"/>
<dbReference type="Reactome" id="R-HSA-1181150">
    <property type="pathway name" value="Signaling by NODAL"/>
</dbReference>
<dbReference type="Reactome" id="R-HSA-198693">
    <property type="pathway name" value="AKT phosphorylates targets in the nucleus"/>
</dbReference>
<dbReference type="Reactome" id="R-HSA-5674400">
    <property type="pathway name" value="Constitutive Signaling by AKT1 E17K in Cancer"/>
</dbReference>
<dbReference type="Reactome" id="R-HSA-5687128">
    <property type="pathway name" value="MAPK6/MAPK4 signaling"/>
</dbReference>
<dbReference type="Reactome" id="R-HSA-6785807">
    <property type="pathway name" value="Interleukin-4 and Interleukin-13 signaling"/>
</dbReference>
<dbReference type="Reactome" id="R-HSA-8862803">
    <property type="pathway name" value="Deregulated CDK5 triggers multiple neurodegenerative pathways in Alzheimer's disease models"/>
</dbReference>
<dbReference type="Reactome" id="R-HSA-8952158">
    <property type="pathway name" value="RUNX3 regulates BCL2L11 (BIM) transcription"/>
</dbReference>
<dbReference type="Reactome" id="R-HSA-9607240">
    <property type="pathway name" value="FLT3 Signaling"/>
</dbReference>
<dbReference type="Reactome" id="R-HSA-9614399">
    <property type="pathway name" value="Regulation of localization of FOXO transcription factors"/>
</dbReference>
<dbReference type="Reactome" id="R-HSA-9614657">
    <property type="pathway name" value="FOXO-mediated transcription of cell death genes"/>
</dbReference>
<dbReference type="Reactome" id="R-HSA-9615017">
    <property type="pathway name" value="FOXO-mediated transcription of oxidative stress, metabolic and neuronal genes"/>
</dbReference>
<dbReference type="Reactome" id="R-HSA-9617629">
    <property type="pathway name" value="Regulation of FOXO transcriptional activity by acetylation"/>
</dbReference>
<dbReference type="Reactome" id="R-HSA-9617828">
    <property type="pathway name" value="FOXO-mediated transcription of cell cycle genes"/>
</dbReference>
<dbReference type="Reactome" id="R-HSA-9634638">
    <property type="pathway name" value="Estrogen-dependent nuclear events downstream of ESR-membrane signaling"/>
</dbReference>
<dbReference type="Reactome" id="R-HSA-9841251">
    <property type="pathway name" value="Mitochondrial unfolded protein response (UPRmt)"/>
</dbReference>
<dbReference type="SignaLink" id="O43524"/>
<dbReference type="SIGNOR" id="O43524"/>
<dbReference type="BioGRID-ORCS" id="2309">
    <property type="hits" value="20 hits in 1150 CRISPR screens"/>
</dbReference>
<dbReference type="ChiTaRS" id="FOXO3">
    <property type="organism name" value="human"/>
</dbReference>
<dbReference type="EvolutionaryTrace" id="O43524"/>
<dbReference type="GeneWiki" id="FOXO3"/>
<dbReference type="GenomeRNAi" id="2309"/>
<dbReference type="Pharos" id="O43524">
    <property type="development level" value="Tbio"/>
</dbReference>
<dbReference type="PRO" id="PR:O43524"/>
<dbReference type="Proteomes" id="UP000005640">
    <property type="component" value="Chromosome 6"/>
</dbReference>
<dbReference type="RNAct" id="O43524">
    <property type="molecule type" value="protein"/>
</dbReference>
<dbReference type="Bgee" id="ENSG00000118689">
    <property type="expression patterns" value="Expressed in secondary oocyte and 213 other cell types or tissues"/>
</dbReference>
<dbReference type="GO" id="GO:0000785">
    <property type="term" value="C:chromatin"/>
    <property type="evidence" value="ECO:0000247"/>
    <property type="project" value="NTNU_SB"/>
</dbReference>
<dbReference type="GO" id="GO:0005737">
    <property type="term" value="C:cytoplasm"/>
    <property type="evidence" value="ECO:0000314"/>
    <property type="project" value="UniProtKB"/>
</dbReference>
<dbReference type="GO" id="GO:0005829">
    <property type="term" value="C:cytosol"/>
    <property type="evidence" value="ECO:0000314"/>
    <property type="project" value="FlyBase"/>
</dbReference>
<dbReference type="GO" id="GO:0005759">
    <property type="term" value="C:mitochondrial matrix"/>
    <property type="evidence" value="ECO:0000304"/>
    <property type="project" value="Reactome"/>
</dbReference>
<dbReference type="GO" id="GO:0005741">
    <property type="term" value="C:mitochondrial outer membrane"/>
    <property type="evidence" value="ECO:0000314"/>
    <property type="project" value="UniProtKB"/>
</dbReference>
<dbReference type="GO" id="GO:0005654">
    <property type="term" value="C:nucleoplasm"/>
    <property type="evidence" value="ECO:0000314"/>
    <property type="project" value="HPA"/>
</dbReference>
<dbReference type="GO" id="GO:0005634">
    <property type="term" value="C:nucleus"/>
    <property type="evidence" value="ECO:0000314"/>
    <property type="project" value="UniProtKB"/>
</dbReference>
<dbReference type="GO" id="GO:0032991">
    <property type="term" value="C:protein-containing complex"/>
    <property type="evidence" value="ECO:0000314"/>
    <property type="project" value="UniProtKB"/>
</dbReference>
<dbReference type="GO" id="GO:0090571">
    <property type="term" value="C:RNA polymerase II transcription repressor complex"/>
    <property type="evidence" value="ECO:0000353"/>
    <property type="project" value="ComplexPortal"/>
</dbReference>
<dbReference type="GO" id="GO:0008013">
    <property type="term" value="F:beta-catenin binding"/>
    <property type="evidence" value="ECO:0000353"/>
    <property type="project" value="ParkinsonsUK-UCL"/>
</dbReference>
<dbReference type="GO" id="GO:0031490">
    <property type="term" value="F:chromatin DNA binding"/>
    <property type="evidence" value="ECO:0000250"/>
    <property type="project" value="UniProtKB"/>
</dbReference>
<dbReference type="GO" id="GO:0003677">
    <property type="term" value="F:DNA binding"/>
    <property type="evidence" value="ECO:0000314"/>
    <property type="project" value="UniProtKB"/>
</dbReference>
<dbReference type="GO" id="GO:0001228">
    <property type="term" value="F:DNA-binding transcription activator activity, RNA polymerase II-specific"/>
    <property type="evidence" value="ECO:0000250"/>
    <property type="project" value="BHF-UCL"/>
</dbReference>
<dbReference type="GO" id="GO:0003700">
    <property type="term" value="F:DNA-binding transcription factor activity"/>
    <property type="evidence" value="ECO:0000314"/>
    <property type="project" value="UniProtKB"/>
</dbReference>
<dbReference type="GO" id="GO:0000981">
    <property type="term" value="F:DNA-binding transcription factor activity, RNA polymerase II-specific"/>
    <property type="evidence" value="ECO:0000247"/>
    <property type="project" value="NTNU_SB"/>
</dbReference>
<dbReference type="GO" id="GO:0001227">
    <property type="term" value="F:DNA-binding transcription repressor activity, RNA polymerase II-specific"/>
    <property type="evidence" value="ECO:0000314"/>
    <property type="project" value="BHF-UCL"/>
</dbReference>
<dbReference type="GO" id="GO:0034246">
    <property type="term" value="F:mitochondrial transcription factor activity"/>
    <property type="evidence" value="ECO:0000315"/>
    <property type="project" value="UniProtKB"/>
</dbReference>
<dbReference type="GO" id="GO:0019901">
    <property type="term" value="F:protein kinase binding"/>
    <property type="evidence" value="ECO:0000353"/>
    <property type="project" value="UniProtKB"/>
</dbReference>
<dbReference type="GO" id="GO:0000978">
    <property type="term" value="F:RNA polymerase II cis-regulatory region sequence-specific DNA binding"/>
    <property type="evidence" value="ECO:0000250"/>
    <property type="project" value="UniProtKB"/>
</dbReference>
<dbReference type="GO" id="GO:0043565">
    <property type="term" value="F:sequence-specific DNA binding"/>
    <property type="evidence" value="ECO:0000314"/>
    <property type="project" value="UniProtKB"/>
</dbReference>
<dbReference type="GO" id="GO:1990837">
    <property type="term" value="F:sequence-specific double-stranded DNA binding"/>
    <property type="evidence" value="ECO:0000314"/>
    <property type="project" value="ARUK-UCL"/>
</dbReference>
<dbReference type="GO" id="GO:0000976">
    <property type="term" value="F:transcription cis-regulatory region binding"/>
    <property type="evidence" value="ECO:0000250"/>
    <property type="project" value="BHF-UCL"/>
</dbReference>
<dbReference type="GO" id="GO:0001221">
    <property type="term" value="F:transcription coregulator binding"/>
    <property type="evidence" value="ECO:0007669"/>
    <property type="project" value="Ensembl"/>
</dbReference>
<dbReference type="GO" id="GO:0001547">
    <property type="term" value="P:antral ovarian follicle growth"/>
    <property type="evidence" value="ECO:0007669"/>
    <property type="project" value="Ensembl"/>
</dbReference>
<dbReference type="GO" id="GO:0048854">
    <property type="term" value="P:brain morphogenesis"/>
    <property type="evidence" value="ECO:0007669"/>
    <property type="project" value="Ensembl"/>
</dbReference>
<dbReference type="GO" id="GO:0060070">
    <property type="term" value="P:canonical Wnt signaling pathway"/>
    <property type="evidence" value="ECO:0007669"/>
    <property type="project" value="Ensembl"/>
</dbReference>
<dbReference type="GO" id="GO:1904646">
    <property type="term" value="P:cellular response to amyloid-beta"/>
    <property type="evidence" value="ECO:0007669"/>
    <property type="project" value="Ensembl"/>
</dbReference>
<dbReference type="GO" id="GO:0071386">
    <property type="term" value="P:cellular response to corticosterone stimulus"/>
    <property type="evidence" value="ECO:0007669"/>
    <property type="project" value="Ensembl"/>
</dbReference>
<dbReference type="GO" id="GO:0042149">
    <property type="term" value="P:cellular response to glucose starvation"/>
    <property type="evidence" value="ECO:0000314"/>
    <property type="project" value="UniProtKB"/>
</dbReference>
<dbReference type="GO" id="GO:0071333">
    <property type="term" value="P:cellular response to glucose stimulus"/>
    <property type="evidence" value="ECO:0007669"/>
    <property type="project" value="Ensembl"/>
</dbReference>
<dbReference type="GO" id="GO:0071456">
    <property type="term" value="P:cellular response to hypoxia"/>
    <property type="evidence" value="ECO:0007669"/>
    <property type="project" value="Ensembl"/>
</dbReference>
<dbReference type="GO" id="GO:1990090">
    <property type="term" value="P:cellular response to nerve growth factor stimulus"/>
    <property type="evidence" value="ECO:0007669"/>
    <property type="project" value="Ensembl"/>
</dbReference>
<dbReference type="GO" id="GO:0034599">
    <property type="term" value="P:cellular response to oxidative stress"/>
    <property type="evidence" value="ECO:0000250"/>
    <property type="project" value="UniProtKB"/>
</dbReference>
<dbReference type="GO" id="GO:0030330">
    <property type="term" value="P:DNA damage response, signal transduction by p53 class mediator"/>
    <property type="evidence" value="ECO:0007669"/>
    <property type="project" value="Ensembl"/>
</dbReference>
<dbReference type="GO" id="GO:0097192">
    <property type="term" value="P:extrinsic apoptotic signaling pathway in absence of ligand"/>
    <property type="evidence" value="ECO:0007669"/>
    <property type="project" value="Ensembl"/>
</dbReference>
<dbReference type="GO" id="GO:0001544">
    <property type="term" value="P:initiation of primordial ovarian follicle growth"/>
    <property type="evidence" value="ECO:0007669"/>
    <property type="project" value="Ensembl"/>
</dbReference>
<dbReference type="GO" id="GO:0006390">
    <property type="term" value="P:mitochondrial transcription"/>
    <property type="evidence" value="ECO:0000315"/>
    <property type="project" value="UniProtKB"/>
</dbReference>
<dbReference type="GO" id="GO:0090090">
    <property type="term" value="P:negative regulation of canonical Wnt signaling pathway"/>
    <property type="evidence" value="ECO:0007669"/>
    <property type="project" value="Ensembl"/>
</dbReference>
<dbReference type="GO" id="GO:0030336">
    <property type="term" value="P:negative regulation of cell migration"/>
    <property type="evidence" value="ECO:0000315"/>
    <property type="project" value="BHF-UCL"/>
</dbReference>
<dbReference type="GO" id="GO:0045665">
    <property type="term" value="P:negative regulation of neuron differentiation"/>
    <property type="evidence" value="ECO:0007669"/>
    <property type="project" value="Ensembl"/>
</dbReference>
<dbReference type="GO" id="GO:0000122">
    <property type="term" value="P:negative regulation of transcription by RNA polymerase II"/>
    <property type="evidence" value="ECO:0000314"/>
    <property type="project" value="BHF-UCL"/>
</dbReference>
<dbReference type="GO" id="GO:0097150">
    <property type="term" value="P:neuronal stem cell population maintenance"/>
    <property type="evidence" value="ECO:0007669"/>
    <property type="project" value="Ensembl"/>
</dbReference>
<dbReference type="GO" id="GO:0001556">
    <property type="term" value="P:oocyte maturation"/>
    <property type="evidence" value="ECO:0007669"/>
    <property type="project" value="Ensembl"/>
</dbReference>
<dbReference type="GO" id="GO:0001542">
    <property type="term" value="P:ovulation from ovarian follicle"/>
    <property type="evidence" value="ECO:0007669"/>
    <property type="project" value="Ensembl"/>
</dbReference>
<dbReference type="GO" id="GO:0043065">
    <property type="term" value="P:positive regulation of apoptotic process"/>
    <property type="evidence" value="ECO:0000314"/>
    <property type="project" value="BHF-UCL"/>
</dbReference>
<dbReference type="GO" id="GO:0010508">
    <property type="term" value="P:positive regulation of autophagy"/>
    <property type="evidence" value="ECO:0000250"/>
    <property type="project" value="UniProtKB"/>
</dbReference>
<dbReference type="GO" id="GO:0045893">
    <property type="term" value="P:positive regulation of DNA-templated transcription"/>
    <property type="evidence" value="ECO:0000314"/>
    <property type="project" value="UniProtKB"/>
</dbReference>
<dbReference type="GO" id="GO:2000353">
    <property type="term" value="P:positive regulation of endothelial cell apoptotic process"/>
    <property type="evidence" value="ECO:0007669"/>
    <property type="project" value="Ensembl"/>
</dbReference>
<dbReference type="GO" id="GO:0045648">
    <property type="term" value="P:positive regulation of erythrocyte differentiation"/>
    <property type="evidence" value="ECO:0000314"/>
    <property type="project" value="MGI"/>
</dbReference>
<dbReference type="GO" id="GO:1901300">
    <property type="term" value="P:positive regulation of hydrogen peroxide-mediated programmed cell death"/>
    <property type="evidence" value="ECO:0007669"/>
    <property type="project" value="Ensembl"/>
</dbReference>
<dbReference type="GO" id="GO:1902895">
    <property type="term" value="P:positive regulation of miRNA transcription"/>
    <property type="evidence" value="ECO:0000250"/>
    <property type="project" value="BHF-UCL"/>
</dbReference>
<dbReference type="GO" id="GO:0014737">
    <property type="term" value="P:positive regulation of muscle atrophy"/>
    <property type="evidence" value="ECO:0000250"/>
    <property type="project" value="UniProtKB"/>
</dbReference>
<dbReference type="GO" id="GO:0043525">
    <property type="term" value="P:positive regulation of neuron apoptotic process"/>
    <property type="evidence" value="ECO:0000315"/>
    <property type="project" value="UniProtKB"/>
</dbReference>
<dbReference type="GO" id="GO:1903428">
    <property type="term" value="P:positive regulation of reactive oxygen species biosynthetic process"/>
    <property type="evidence" value="ECO:0007669"/>
    <property type="project" value="Ensembl"/>
</dbReference>
<dbReference type="GO" id="GO:0045591">
    <property type="term" value="P:positive regulation of regulatory T cell differentiation"/>
    <property type="evidence" value="ECO:0000314"/>
    <property type="project" value="UniProtKB"/>
</dbReference>
<dbReference type="GO" id="GO:0045944">
    <property type="term" value="P:positive regulation of transcription by RNA polymerase II"/>
    <property type="evidence" value="ECO:0000314"/>
    <property type="project" value="UniProtKB"/>
</dbReference>
<dbReference type="GO" id="GO:2000177">
    <property type="term" value="P:regulation of neural precursor cell proliferation"/>
    <property type="evidence" value="ECO:0007669"/>
    <property type="project" value="Ensembl"/>
</dbReference>
<dbReference type="GO" id="GO:0006357">
    <property type="term" value="P:regulation of transcription by RNA polymerase II"/>
    <property type="evidence" value="ECO:0000250"/>
    <property type="project" value="UniProtKB"/>
</dbReference>
<dbReference type="GO" id="GO:0006417">
    <property type="term" value="P:regulation of translation"/>
    <property type="evidence" value="ECO:0000314"/>
    <property type="project" value="UniProtKB"/>
</dbReference>
<dbReference type="GO" id="GO:0071548">
    <property type="term" value="P:response to dexamethasone"/>
    <property type="evidence" value="ECO:0007669"/>
    <property type="project" value="Ensembl"/>
</dbReference>
<dbReference type="GO" id="GO:0070542">
    <property type="term" value="P:response to fatty acid"/>
    <property type="evidence" value="ECO:0000250"/>
    <property type="project" value="UniProtKB"/>
</dbReference>
<dbReference type="GO" id="GO:0042594">
    <property type="term" value="P:response to starvation"/>
    <property type="evidence" value="ECO:0000250"/>
    <property type="project" value="UniProtKB"/>
</dbReference>
<dbReference type="GO" id="GO:1990785">
    <property type="term" value="P:response to water-immersion restraint stress"/>
    <property type="evidence" value="ECO:0007669"/>
    <property type="project" value="Ensembl"/>
</dbReference>
<dbReference type="GO" id="GO:0009410">
    <property type="term" value="P:response to xenobiotic stimulus"/>
    <property type="evidence" value="ECO:0007669"/>
    <property type="project" value="Ensembl"/>
</dbReference>
<dbReference type="GO" id="GO:0033209">
    <property type="term" value="P:tumor necrosis factor-mediated signaling pathway"/>
    <property type="evidence" value="ECO:0000315"/>
    <property type="project" value="UniProtKB"/>
</dbReference>
<dbReference type="CDD" id="cd20061">
    <property type="entry name" value="FH_FOXO3"/>
    <property type="match status" value="1"/>
</dbReference>
<dbReference type="FunFam" id="1.10.10.10:FF:000032">
    <property type="entry name" value="Forkhead box protein O4"/>
    <property type="match status" value="1"/>
</dbReference>
<dbReference type="Gene3D" id="6.10.250.1690">
    <property type="match status" value="2"/>
</dbReference>
<dbReference type="Gene3D" id="1.10.10.10">
    <property type="entry name" value="Winged helix-like DNA-binding domain superfamily/Winged helix DNA-binding domain"/>
    <property type="match status" value="1"/>
</dbReference>
<dbReference type="IDEAL" id="IID00433"/>
<dbReference type="InterPro" id="IPR001766">
    <property type="entry name" value="Fork_head_dom"/>
</dbReference>
<dbReference type="InterPro" id="IPR032067">
    <property type="entry name" value="FOXO-TAD"/>
</dbReference>
<dbReference type="InterPro" id="IPR032068">
    <property type="entry name" value="FOXO_KIX-bd"/>
</dbReference>
<dbReference type="InterPro" id="IPR030456">
    <property type="entry name" value="TF_fork_head_CS_2"/>
</dbReference>
<dbReference type="InterPro" id="IPR036388">
    <property type="entry name" value="WH-like_DNA-bd_sf"/>
</dbReference>
<dbReference type="InterPro" id="IPR036390">
    <property type="entry name" value="WH_DNA-bd_sf"/>
</dbReference>
<dbReference type="PANTHER" id="PTHR45767">
    <property type="entry name" value="FORKHEAD BOX PROTEIN O"/>
    <property type="match status" value="1"/>
</dbReference>
<dbReference type="PANTHER" id="PTHR45767:SF4">
    <property type="entry name" value="FORKHEAD BOX PROTEIN O3-RELATED"/>
    <property type="match status" value="1"/>
</dbReference>
<dbReference type="Pfam" id="PF00250">
    <property type="entry name" value="Forkhead"/>
    <property type="match status" value="1"/>
</dbReference>
<dbReference type="Pfam" id="PF16676">
    <property type="entry name" value="FOXO-TAD"/>
    <property type="match status" value="1"/>
</dbReference>
<dbReference type="Pfam" id="PF16675">
    <property type="entry name" value="FOXO_KIX_bdg"/>
    <property type="match status" value="1"/>
</dbReference>
<dbReference type="PRINTS" id="PR00053">
    <property type="entry name" value="FORKHEAD"/>
</dbReference>
<dbReference type="SMART" id="SM00339">
    <property type="entry name" value="FH"/>
    <property type="match status" value="1"/>
</dbReference>
<dbReference type="SUPFAM" id="SSF46785">
    <property type="entry name" value="Winged helix' DNA-binding domain"/>
    <property type="match status" value="1"/>
</dbReference>
<dbReference type="PROSITE" id="PS00658">
    <property type="entry name" value="FORK_HEAD_2"/>
    <property type="match status" value="1"/>
</dbReference>
<dbReference type="PROSITE" id="PS50039">
    <property type="entry name" value="FORK_HEAD_3"/>
    <property type="match status" value="1"/>
</dbReference>
<sequence length="673" mass="71277">MAEAPASPAPLSPLEVELDPEFEPQSRPRSCTWPLQRPELQASPAKPSGETAADSMIPEEEDDEDDEDGGGRAGSAMAIGGGGGSGTLGSGLLLEDSARVLAPGGQDPGSGPATAAGGLSGGTQALLQPQQPLPPPQPGAAGGSGQPRKCSSRRNAWGNLSYADLITRAIESSPDKRLTLSQIYEWMVRCVPYFKDKGDSNSSAGWKNSIRHNLSLHSRFMRVQNEGTGKSSWWIINPDGGKSGKAPRRRAVSMDNSNKYTKSRGRAAKKKAALQTAPESADDSPSQLSKWPGSPTSRSSDELDAWTDFRSRTNSNASTVSGRLSPIMASTELDEVQDDDAPLSPMLYSSSASLSPSVSKPCTVELPRLTDMAGTMNLNDGLTENLMDDLLDNITLPPSQPSPTGGLMQRSSSFPYTTKGSGLGSPTSSFNSTVFGPSSLNSLRQSPMQTIQENKPATFSSMSHYGNQTLQDLLTSDSLSHSDVMMTQSDPLMSQASTAVSAQNSRRNVMLRNDPMMSFAAQPNQGSLVNQNLLHHQHQTQGALGGSRALSNSVSNMGLSESSSLGSAKHQQQSPVSQSMQTLSDSLSGSSLYSTSANLPVMGHEKFPSDLDLDMFNGSLECDMESIIRSELMDADGLDFNFDSLISTQNVVGLNVGNFTGAKQASSQSWVPG</sequence>
<gene>
    <name evidence="27" type="primary">FOXO3</name>
    <name evidence="25" type="synonym">FKHRL1</name>
    <name evidence="22" type="synonym">FOXO3A</name>
</gene>
<name>FOXO3_HUMAN</name>
<reference key="1">
    <citation type="journal article" date="1998" name="Genomics">
        <title>Cloning and characterization of three human forkhead genes that comprise an FKHR-like gene subfamily.</title>
        <authorList>
            <person name="Anderson M.J."/>
            <person name="Viars C.S."/>
            <person name="Czekay S."/>
            <person name="Cavenee W.K."/>
            <person name="Arden K.C."/>
        </authorList>
    </citation>
    <scope>NUCLEOTIDE SEQUENCE [MRNA] (ISOFORM 1)</scope>
    <scope>TISSUE SPECIFICITY</scope>
    <source>
        <tissue>Rhabdomyosarcoma</tissue>
    </source>
</reference>
<reference key="2">
    <citation type="journal article" date="2004" name="Nat. Genet.">
        <title>Complete sequencing and characterization of 21,243 full-length human cDNAs.</title>
        <authorList>
            <person name="Ota T."/>
            <person name="Suzuki Y."/>
            <person name="Nishikawa T."/>
            <person name="Otsuki T."/>
            <person name="Sugiyama T."/>
            <person name="Irie R."/>
            <person name="Wakamatsu A."/>
            <person name="Hayashi K."/>
            <person name="Sato H."/>
            <person name="Nagai K."/>
            <person name="Kimura K."/>
            <person name="Makita H."/>
            <person name="Sekine M."/>
            <person name="Obayashi M."/>
            <person name="Nishi T."/>
            <person name="Shibahara T."/>
            <person name="Tanaka T."/>
            <person name="Ishii S."/>
            <person name="Yamamoto J."/>
            <person name="Saito K."/>
            <person name="Kawai Y."/>
            <person name="Isono Y."/>
            <person name="Nakamura Y."/>
            <person name="Nagahari K."/>
            <person name="Murakami K."/>
            <person name="Yasuda T."/>
            <person name="Iwayanagi T."/>
            <person name="Wagatsuma M."/>
            <person name="Shiratori A."/>
            <person name="Sudo H."/>
            <person name="Hosoiri T."/>
            <person name="Kaku Y."/>
            <person name="Kodaira H."/>
            <person name="Kondo H."/>
            <person name="Sugawara M."/>
            <person name="Takahashi M."/>
            <person name="Kanda K."/>
            <person name="Yokoi T."/>
            <person name="Furuya T."/>
            <person name="Kikkawa E."/>
            <person name="Omura Y."/>
            <person name="Abe K."/>
            <person name="Kamihara K."/>
            <person name="Katsuta N."/>
            <person name="Sato K."/>
            <person name="Tanikawa M."/>
            <person name="Yamazaki M."/>
            <person name="Ninomiya K."/>
            <person name="Ishibashi T."/>
            <person name="Yamashita H."/>
            <person name="Murakawa K."/>
            <person name="Fujimori K."/>
            <person name="Tanai H."/>
            <person name="Kimata M."/>
            <person name="Watanabe M."/>
            <person name="Hiraoka S."/>
            <person name="Chiba Y."/>
            <person name="Ishida S."/>
            <person name="Ono Y."/>
            <person name="Takiguchi S."/>
            <person name="Watanabe S."/>
            <person name="Yosida M."/>
            <person name="Hotuta T."/>
            <person name="Kusano J."/>
            <person name="Kanehori K."/>
            <person name="Takahashi-Fujii A."/>
            <person name="Hara H."/>
            <person name="Tanase T.-O."/>
            <person name="Nomura Y."/>
            <person name="Togiya S."/>
            <person name="Komai F."/>
            <person name="Hara R."/>
            <person name="Takeuchi K."/>
            <person name="Arita M."/>
            <person name="Imose N."/>
            <person name="Musashino K."/>
            <person name="Yuuki H."/>
            <person name="Oshima A."/>
            <person name="Sasaki N."/>
            <person name="Aotsuka S."/>
            <person name="Yoshikawa Y."/>
            <person name="Matsunawa H."/>
            <person name="Ichihara T."/>
            <person name="Shiohata N."/>
            <person name="Sano S."/>
            <person name="Moriya S."/>
            <person name="Momiyama H."/>
            <person name="Satoh N."/>
            <person name="Takami S."/>
            <person name="Terashima Y."/>
            <person name="Suzuki O."/>
            <person name="Nakagawa S."/>
            <person name="Senoh A."/>
            <person name="Mizoguchi H."/>
            <person name="Goto Y."/>
            <person name="Shimizu F."/>
            <person name="Wakebe H."/>
            <person name="Hishigaki H."/>
            <person name="Watanabe T."/>
            <person name="Sugiyama A."/>
            <person name="Takemoto M."/>
            <person name="Kawakami B."/>
            <person name="Yamazaki M."/>
            <person name="Watanabe K."/>
            <person name="Kumagai A."/>
            <person name="Itakura S."/>
            <person name="Fukuzumi Y."/>
            <person name="Fujimori Y."/>
            <person name="Komiyama M."/>
            <person name="Tashiro H."/>
            <person name="Tanigami A."/>
            <person name="Fujiwara T."/>
            <person name="Ono T."/>
            <person name="Yamada K."/>
            <person name="Fujii Y."/>
            <person name="Ozaki K."/>
            <person name="Hirao M."/>
            <person name="Ohmori Y."/>
            <person name="Kawabata A."/>
            <person name="Hikiji T."/>
            <person name="Kobatake N."/>
            <person name="Inagaki H."/>
            <person name="Ikema Y."/>
            <person name="Okamoto S."/>
            <person name="Okitani R."/>
            <person name="Kawakami T."/>
            <person name="Noguchi S."/>
            <person name="Itoh T."/>
            <person name="Shigeta K."/>
            <person name="Senba T."/>
            <person name="Matsumura K."/>
            <person name="Nakajima Y."/>
            <person name="Mizuno T."/>
            <person name="Morinaga M."/>
            <person name="Sasaki M."/>
            <person name="Togashi T."/>
            <person name="Oyama M."/>
            <person name="Hata H."/>
            <person name="Watanabe M."/>
            <person name="Komatsu T."/>
            <person name="Mizushima-Sugano J."/>
            <person name="Satoh T."/>
            <person name="Shirai Y."/>
            <person name="Takahashi Y."/>
            <person name="Nakagawa K."/>
            <person name="Okumura K."/>
            <person name="Nagase T."/>
            <person name="Nomura N."/>
            <person name="Kikuchi H."/>
            <person name="Masuho Y."/>
            <person name="Yamashita R."/>
            <person name="Nakai K."/>
            <person name="Yada T."/>
            <person name="Nakamura Y."/>
            <person name="Ohara O."/>
            <person name="Isogai T."/>
            <person name="Sugano S."/>
        </authorList>
    </citation>
    <scope>NUCLEOTIDE SEQUENCE [LARGE SCALE MRNA] (ISOFORM 2)</scope>
    <source>
        <tissue>Stomach</tissue>
    </source>
</reference>
<reference key="3">
    <citation type="journal article" date="2003" name="Nature">
        <title>The DNA sequence and analysis of human chromosome 6.</title>
        <authorList>
            <person name="Mungall A.J."/>
            <person name="Palmer S.A."/>
            <person name="Sims S.K."/>
            <person name="Edwards C.A."/>
            <person name="Ashurst J.L."/>
            <person name="Wilming L."/>
            <person name="Jones M.C."/>
            <person name="Horton R."/>
            <person name="Hunt S.E."/>
            <person name="Scott C.E."/>
            <person name="Gilbert J.G.R."/>
            <person name="Clamp M.E."/>
            <person name="Bethel G."/>
            <person name="Milne S."/>
            <person name="Ainscough R."/>
            <person name="Almeida J.P."/>
            <person name="Ambrose K.D."/>
            <person name="Andrews T.D."/>
            <person name="Ashwell R.I.S."/>
            <person name="Babbage A.K."/>
            <person name="Bagguley C.L."/>
            <person name="Bailey J."/>
            <person name="Banerjee R."/>
            <person name="Barker D.J."/>
            <person name="Barlow K.F."/>
            <person name="Bates K."/>
            <person name="Beare D.M."/>
            <person name="Beasley H."/>
            <person name="Beasley O."/>
            <person name="Bird C.P."/>
            <person name="Blakey S.E."/>
            <person name="Bray-Allen S."/>
            <person name="Brook J."/>
            <person name="Brown A.J."/>
            <person name="Brown J.Y."/>
            <person name="Burford D.C."/>
            <person name="Burrill W."/>
            <person name="Burton J."/>
            <person name="Carder C."/>
            <person name="Carter N.P."/>
            <person name="Chapman J.C."/>
            <person name="Clark S.Y."/>
            <person name="Clark G."/>
            <person name="Clee C.M."/>
            <person name="Clegg S."/>
            <person name="Cobley V."/>
            <person name="Collier R.E."/>
            <person name="Collins J.E."/>
            <person name="Colman L.K."/>
            <person name="Corby N.R."/>
            <person name="Coville G.J."/>
            <person name="Culley K.M."/>
            <person name="Dhami P."/>
            <person name="Davies J."/>
            <person name="Dunn M."/>
            <person name="Earthrowl M.E."/>
            <person name="Ellington A.E."/>
            <person name="Evans K.A."/>
            <person name="Faulkner L."/>
            <person name="Francis M.D."/>
            <person name="Frankish A."/>
            <person name="Frankland J."/>
            <person name="French L."/>
            <person name="Garner P."/>
            <person name="Garnett J."/>
            <person name="Ghori M.J."/>
            <person name="Gilby L.M."/>
            <person name="Gillson C.J."/>
            <person name="Glithero R.J."/>
            <person name="Grafham D.V."/>
            <person name="Grant M."/>
            <person name="Gribble S."/>
            <person name="Griffiths C."/>
            <person name="Griffiths M.N.D."/>
            <person name="Hall R."/>
            <person name="Halls K.S."/>
            <person name="Hammond S."/>
            <person name="Harley J.L."/>
            <person name="Hart E.A."/>
            <person name="Heath P.D."/>
            <person name="Heathcott R."/>
            <person name="Holmes S.J."/>
            <person name="Howden P.J."/>
            <person name="Howe K.L."/>
            <person name="Howell G.R."/>
            <person name="Huckle E."/>
            <person name="Humphray S.J."/>
            <person name="Humphries M.D."/>
            <person name="Hunt A.R."/>
            <person name="Johnson C.M."/>
            <person name="Joy A.A."/>
            <person name="Kay M."/>
            <person name="Keenan S.J."/>
            <person name="Kimberley A.M."/>
            <person name="King A."/>
            <person name="Laird G.K."/>
            <person name="Langford C."/>
            <person name="Lawlor S."/>
            <person name="Leongamornlert D.A."/>
            <person name="Leversha M."/>
            <person name="Lloyd C.R."/>
            <person name="Lloyd D.M."/>
            <person name="Loveland J.E."/>
            <person name="Lovell J."/>
            <person name="Martin S."/>
            <person name="Mashreghi-Mohammadi M."/>
            <person name="Maslen G.L."/>
            <person name="Matthews L."/>
            <person name="McCann O.T."/>
            <person name="McLaren S.J."/>
            <person name="McLay K."/>
            <person name="McMurray A."/>
            <person name="Moore M.J.F."/>
            <person name="Mullikin J.C."/>
            <person name="Niblett D."/>
            <person name="Nickerson T."/>
            <person name="Novik K.L."/>
            <person name="Oliver K."/>
            <person name="Overton-Larty E.K."/>
            <person name="Parker A."/>
            <person name="Patel R."/>
            <person name="Pearce A.V."/>
            <person name="Peck A.I."/>
            <person name="Phillimore B.J.C.T."/>
            <person name="Phillips S."/>
            <person name="Plumb R.W."/>
            <person name="Porter K.M."/>
            <person name="Ramsey Y."/>
            <person name="Ranby S.A."/>
            <person name="Rice C.M."/>
            <person name="Ross M.T."/>
            <person name="Searle S.M."/>
            <person name="Sehra H.K."/>
            <person name="Sheridan E."/>
            <person name="Skuce C.D."/>
            <person name="Smith S."/>
            <person name="Smith M."/>
            <person name="Spraggon L."/>
            <person name="Squares S.L."/>
            <person name="Steward C.A."/>
            <person name="Sycamore N."/>
            <person name="Tamlyn-Hall G."/>
            <person name="Tester J."/>
            <person name="Theaker A.J."/>
            <person name="Thomas D.W."/>
            <person name="Thorpe A."/>
            <person name="Tracey A."/>
            <person name="Tromans A."/>
            <person name="Tubby B."/>
            <person name="Wall M."/>
            <person name="Wallis J.M."/>
            <person name="West A.P."/>
            <person name="White S.S."/>
            <person name="Whitehead S.L."/>
            <person name="Whittaker H."/>
            <person name="Wild A."/>
            <person name="Willey D.J."/>
            <person name="Wilmer T.E."/>
            <person name="Wood J.M."/>
            <person name="Wray P.W."/>
            <person name="Wyatt J.C."/>
            <person name="Young L."/>
            <person name="Younger R.M."/>
            <person name="Bentley D.R."/>
            <person name="Coulson A."/>
            <person name="Durbin R.M."/>
            <person name="Hubbard T."/>
            <person name="Sulston J.E."/>
            <person name="Dunham I."/>
            <person name="Rogers J."/>
            <person name="Beck S."/>
        </authorList>
    </citation>
    <scope>NUCLEOTIDE SEQUENCE [LARGE SCALE GENOMIC DNA]</scope>
</reference>
<reference key="4">
    <citation type="submission" date="2005-09" db="EMBL/GenBank/DDBJ databases">
        <authorList>
            <person name="Mural R.J."/>
            <person name="Istrail S."/>
            <person name="Sutton G.G."/>
            <person name="Florea L."/>
            <person name="Halpern A.L."/>
            <person name="Mobarry C.M."/>
            <person name="Lippert R."/>
            <person name="Walenz B."/>
            <person name="Shatkay H."/>
            <person name="Dew I."/>
            <person name="Miller J.R."/>
            <person name="Flanigan M.J."/>
            <person name="Edwards N.J."/>
            <person name="Bolanos R."/>
            <person name="Fasulo D."/>
            <person name="Halldorsson B.V."/>
            <person name="Hannenhalli S."/>
            <person name="Turner R."/>
            <person name="Yooseph S."/>
            <person name="Lu F."/>
            <person name="Nusskern D.R."/>
            <person name="Shue B.C."/>
            <person name="Zheng X.H."/>
            <person name="Zhong F."/>
            <person name="Delcher A.L."/>
            <person name="Huson D.H."/>
            <person name="Kravitz S.A."/>
            <person name="Mouchard L."/>
            <person name="Reinert K."/>
            <person name="Remington K.A."/>
            <person name="Clark A.G."/>
            <person name="Waterman M.S."/>
            <person name="Eichler E.E."/>
            <person name="Adams M.D."/>
            <person name="Hunkapiller M.W."/>
            <person name="Myers E.W."/>
            <person name="Venter J.C."/>
        </authorList>
    </citation>
    <scope>NUCLEOTIDE SEQUENCE [LARGE SCALE GENOMIC DNA]</scope>
</reference>
<reference key="5">
    <citation type="journal article" date="2004" name="Genome Res.">
        <title>The status, quality, and expansion of the NIH full-length cDNA project: the Mammalian Gene Collection (MGC).</title>
        <authorList>
            <consortium name="The MGC Project Team"/>
        </authorList>
    </citation>
    <scope>NUCLEOTIDE SEQUENCE [LARGE SCALE MRNA] (ISOFORM 1)</scope>
    <source>
        <tissue>Muscle</tissue>
        <tissue>Placenta</tissue>
    </source>
</reference>
<reference key="6">
    <citation type="journal article" date="1997" name="Blood">
        <title>AF6q21, a novel partner of the MLL gene in t(6;11)(q21;q23), defines a forkhead transcriptional factor subfamily.</title>
        <authorList>
            <person name="Hillion J."/>
            <person name="Le Coniat M."/>
            <person name="Jonveaux P."/>
            <person name="Berger R."/>
            <person name="Bernard O.A."/>
        </authorList>
    </citation>
    <scope>NUCLEOTIDE SEQUENCE [GENOMIC DNA / MRNA] OF 1-383 (ISOFORM 1)</scope>
    <scope>INVOLVEMENT IN SECONDARY ACUTE LEUKEMIAS</scope>
</reference>
<reference key="7">
    <citation type="journal article" date="1999" name="Cell">
        <title>Akt promotes cell survival by phosphorylating and inhibiting a Forkhead transcription factor.</title>
        <authorList>
            <person name="Brunet A."/>
            <person name="Bonni A."/>
            <person name="Zigmond M.J."/>
            <person name="Lin M.Z."/>
            <person name="Juo P."/>
            <person name="Hu L.S."/>
            <person name="Anderson M.J."/>
            <person name="Arden K.C."/>
            <person name="Blenis J."/>
            <person name="Greenberg M.E."/>
        </authorList>
    </citation>
    <scope>FUNCTION</scope>
    <scope>SUBCELLULAR LOCATION</scope>
    <scope>PHOSPHORYLATION AT THR-32; SER-253 AND SER-315</scope>
    <scope>MUTAGENESIS OF THR-32; SER-253 AND SER-315</scope>
</reference>
<reference key="8">
    <citation type="journal article" date="2001" name="Mol. Cell. Biol.">
        <title>Protein kinase SGK mediates survival signals by phosphorylating the forkhead transcription factor FKHRL1 (FOXO3a).</title>
        <authorList>
            <person name="Brunet A."/>
            <person name="Park J."/>
            <person name="Tran H."/>
            <person name="Hu L.S."/>
            <person name="Hemmings B.A."/>
            <person name="Greenberg M.E."/>
        </authorList>
    </citation>
    <scope>PHOSPHORYLATION AT SER-315</scope>
</reference>
<reference key="9">
    <citation type="journal article" date="2004" name="Cell">
        <title>IkappaB kinase promotes tumorigenesis through inhibition of forkhead FOXO3a.</title>
        <authorList>
            <person name="Hu M.C."/>
            <person name="Lee D.F."/>
            <person name="Xia W."/>
            <person name="Golfman L.S."/>
            <person name="Ou-Yang F."/>
            <person name="Yang J.Y."/>
            <person name="Zou Y."/>
            <person name="Bao S."/>
            <person name="Hanada N."/>
            <person name="Saso H."/>
            <person name="Kobayashi R."/>
            <person name="Hung M.C."/>
        </authorList>
    </citation>
    <scope>INTERACTION WITH CHUK AND IKBKB</scope>
    <scope>REGION</scope>
    <scope>SUBCELLULAR LOCATION</scope>
    <scope>PHOSPHORYLATION AT SER-644</scope>
    <scope>MUTAGENESIS OF SER-644</scope>
</reference>
<reference key="10">
    <citation type="journal article" date="2006" name="Cell">
        <title>A conserved MST-FOXO signaling pathway mediates oxidative-stress responses and extends life span.</title>
        <authorList>
            <person name="Lehtinen M.K."/>
            <person name="Yuan Z."/>
            <person name="Boag P.R."/>
            <person name="Yang Y."/>
            <person name="Villen J."/>
            <person name="Becker E.B.E."/>
            <person name="DiBacco S."/>
            <person name="de la Iglesia N."/>
            <person name="Gygi S.P."/>
            <person name="Blackwell T.K."/>
            <person name="Bonni A."/>
        </authorList>
    </citation>
    <scope>FUNCTION</scope>
    <scope>PHOSPHORYLATION AT SER-209</scope>
    <scope>INTERACTION WITH STK4/MST1 AND YWHAB</scope>
    <scope>SUBCELLULAR LOCATION</scope>
    <scope>MUTAGENESIS OF SER-209</scope>
</reference>
<reference key="11">
    <citation type="journal article" date="2007" name="J. Biol. Chem.">
        <title>The energy sensor AMP-activated protein kinase directly regulates the mammalian FOXO3 transcription factor.</title>
        <authorList>
            <person name="Greer E.L."/>
            <person name="Oskoui P.R."/>
            <person name="Banko M.R."/>
            <person name="Maniar J.M."/>
            <person name="Gygi M.P."/>
            <person name="Gygi S.P."/>
            <person name="Brunet A."/>
        </authorList>
    </citation>
    <scope>PHOSPHORYLATION AT THR-179; SER-399; SER-413; SER-555; SER-588 AND SER-626</scope>
    <scope>MUTAGENESIS OF THR-179; SER-399; SER-413; SER-555; SER-588 AND SER-626</scope>
    <scope>SUBCELLULAR LOCATION</scope>
</reference>
<reference key="12">
    <citation type="journal article" date="2008" name="Cancer Res.">
        <title>Pim kinases promote cell cycle progression by phosphorylating and down-regulating p27Kip1 at the transcriptional and posttranscriptional levels.</title>
        <authorList>
            <person name="Morishita D."/>
            <person name="Katayama R."/>
            <person name="Sekimizu K."/>
            <person name="Tsuruo T."/>
            <person name="Fujita N."/>
        </authorList>
    </citation>
    <scope>INTERACTION WITH PIM1</scope>
    <scope>PHOSPHORYLATION</scope>
</reference>
<reference key="13">
    <citation type="journal article" date="2008" name="J. Proteome Res.">
        <title>Combining protein-based IMAC, peptide-based IMAC, and MudPIT for efficient phosphoproteomic analysis.</title>
        <authorList>
            <person name="Cantin G.T."/>
            <person name="Yi W."/>
            <person name="Lu B."/>
            <person name="Park S.K."/>
            <person name="Xu T."/>
            <person name="Lee J.-D."/>
            <person name="Yates J.R. III"/>
        </authorList>
    </citation>
    <scope>PHOSPHORYLATION [LARGE SCALE ANALYSIS] AT SER-421</scope>
    <scope>IDENTIFICATION BY MASS SPECTROMETRY [LARGE SCALE ANALYSIS]</scope>
    <source>
        <tissue>Cervix carcinoma</tissue>
    </source>
</reference>
<reference key="14">
    <citation type="journal article" date="2008" name="Proc. Natl. Acad. Sci. U.S.A.">
        <title>A quantitative atlas of mitotic phosphorylation.</title>
        <authorList>
            <person name="Dephoure N."/>
            <person name="Zhou C."/>
            <person name="Villen J."/>
            <person name="Beausoleil S.A."/>
            <person name="Bakalarski C.E."/>
            <person name="Elledge S.J."/>
            <person name="Gygi S.P."/>
        </authorList>
    </citation>
    <scope>PHOSPHORYLATION [LARGE SCALE ANALYSIS] AT SER-280 AND SER-284</scope>
    <scope>IDENTIFICATION BY MASS SPECTROMETRY [LARGE SCALE ANALYSIS]</scope>
    <source>
        <tissue>Cervix carcinoma</tissue>
    </source>
</reference>
<reference key="15">
    <citation type="journal article" date="2009" name="Anal. Chem.">
        <title>Lys-N and trypsin cover complementary parts of the phosphoproteome in a refined SCX-based approach.</title>
        <authorList>
            <person name="Gauci S."/>
            <person name="Helbig A.O."/>
            <person name="Slijper M."/>
            <person name="Krijgsveld J."/>
            <person name="Heck A.J."/>
            <person name="Mohammed S."/>
        </authorList>
    </citation>
    <scope>IDENTIFICATION BY MASS SPECTROMETRY [LARGE SCALE ANALYSIS]</scope>
</reference>
<reference key="16">
    <citation type="journal article" date="2009" name="Sci. Signal.">
        <title>Quantitative phosphoproteomic analysis of T cell receptor signaling reveals system-wide modulation of protein-protein interactions.</title>
        <authorList>
            <person name="Mayya V."/>
            <person name="Lundgren D.H."/>
            <person name="Hwang S.-I."/>
            <person name="Rezaul K."/>
            <person name="Wu L."/>
            <person name="Eng J.K."/>
            <person name="Rodionov V."/>
            <person name="Han D.K."/>
        </authorList>
    </citation>
    <scope>PHOSPHORYLATION [LARGE SCALE ANALYSIS] AT SER-280</scope>
    <scope>IDENTIFICATION BY MASS SPECTROMETRY [LARGE SCALE ANALYSIS]</scope>
    <source>
        <tissue>Leukemic T-cell</tissue>
    </source>
</reference>
<reference key="17">
    <citation type="journal article" date="2010" name="Mol. Biol. Cell">
        <title>Deficiency of the transcriptional regulator p8 results in increased autophagy and apoptosis, and causes impaired heart function.</title>
        <authorList>
            <person name="Kong D.K."/>
            <person name="Georgescu S.P."/>
            <person name="Cano C."/>
            <person name="Aronovitz M.J."/>
            <person name="Iovanna J.L."/>
            <person name="Patten R.D."/>
            <person name="Kyriakis J.M."/>
            <person name="Goruppi S."/>
        </authorList>
    </citation>
    <scope>INTERACTION WITH NUPR1</scope>
</reference>
<reference key="18">
    <citation type="journal article" date="2011" name="BMC Syst. Biol.">
        <title>Initial characterization of the human central proteome.</title>
        <authorList>
            <person name="Burkard T.R."/>
            <person name="Planyavsky M."/>
            <person name="Kaupe I."/>
            <person name="Breitwieser F.P."/>
            <person name="Buerckstuemmer T."/>
            <person name="Bennett K.L."/>
            <person name="Superti-Furga G."/>
            <person name="Colinge J."/>
        </authorList>
    </citation>
    <scope>IDENTIFICATION BY MASS SPECTROMETRY [LARGE SCALE ANALYSIS]</scope>
</reference>
<reference key="19">
    <citation type="journal article" date="2011" name="Mol. Cell">
        <title>The MK5/PRAK kinase and Myc form a negative feedback loop that is disrupted during colorectal tumorigenesis.</title>
        <authorList>
            <person name="Kress T.R."/>
            <person name="Cannell I.G."/>
            <person name="Brenkman A.B."/>
            <person name="Samans B."/>
            <person name="Gaestel M."/>
            <person name="Roepman P."/>
            <person name="Burgering B.M."/>
            <person name="Bushell M."/>
            <person name="Rosenwald A."/>
            <person name="Eilers M."/>
        </authorList>
    </citation>
    <scope>FUNCTION</scope>
    <scope>SUBCELLULAR LOCATION</scope>
    <scope>DNA-BINDING</scope>
    <scope>PHOSPHORYLATION AT SER-215; SER-253; SER-551 AND SER-555</scope>
</reference>
<reference key="20">
    <citation type="journal article" date="2012" name="Aging (Albany NY)">
        <title>Methylation by Set9 modulates FoxO3 stability and transcriptional activity.</title>
        <authorList>
            <person name="Calnan D.R."/>
            <person name="Webb A.E."/>
            <person name="White J.L."/>
            <person name="Stowe T.R."/>
            <person name="Goswami T."/>
            <person name="Shi X."/>
            <person name="Espejo A."/>
            <person name="Bedford M.T."/>
            <person name="Gozani O."/>
            <person name="Gygi S.P."/>
            <person name="Brunet A."/>
        </authorList>
    </citation>
    <scope>METHYLATION AT LYS-46; LYS-149; LYS-230; LYS-262; LYS-271; LYS-290 AND LYS-419</scope>
    <scope>MUTAGENESIS OF LYS-269; LYS-270 AND LYS-271</scope>
</reference>
<reference key="21">
    <citation type="journal article" date="2012" name="Cell. Signal.">
        <title>IKK-beta mediates chemoresistance by sequestering FOXO3; a critical factor for cell survival and death.</title>
        <authorList>
            <person name="Tezil T."/>
            <person name="Bodur C."/>
            <person name="Kutuk O."/>
            <person name="Basaga H."/>
        </authorList>
    </citation>
    <scope>INTERACTION WITH IKBKB</scope>
    <scope>SUBCELLULAR LOCATION</scope>
</reference>
<reference key="22">
    <citation type="journal article" date="2012" name="Oncogene">
        <title>Deacetylation of FOXO3 by SIRT1 or SIRT2 leads to Skp2-mediated FOXO3 ubiquitination and degradation.</title>
        <authorList>
            <person name="Wang F."/>
            <person name="Chan C.H."/>
            <person name="Chen K."/>
            <person name="Guan X."/>
            <person name="Lin H.K."/>
            <person name="Tong Q."/>
        </authorList>
    </citation>
    <scope>ACETYLATION</scope>
    <scope>DEACETYLATION BY SIRT2</scope>
    <scope>INTERACTION WITH SKP2</scope>
    <scope>UBIQUITINATION BY SKP2</scope>
    <scope>MUTAGENESIS OF LYS-242; LYS-259; LYS-290 AND LYS-569</scope>
</reference>
<reference key="23">
    <citation type="journal article" date="2012" name="PLoS ONE">
        <title>CHOP potentially co-operates with FOXO3a in neuronal cells to regulate PUMA and BIM expression in response to ER stress.</title>
        <authorList>
            <person name="Ghosh A.P."/>
            <person name="Klocke B.J."/>
            <person name="Ballestas M.E."/>
            <person name="Roth K.A."/>
        </authorList>
    </citation>
    <scope>INTERACTION WITH DDIT3</scope>
    <scope>SUBCELLULAR LOCATION</scope>
</reference>
<reference key="24">
    <citation type="journal article" date="2013" name="Cell. Mol. Life Sci.">
        <title>A novel AMPK-dependent FoxO3A-SIRT3 intramitochondrial complex sensing glucose levels.</title>
        <authorList>
            <person name="Peserico A."/>
            <person name="Chiacchiera F."/>
            <person name="Grossi V."/>
            <person name="Matrone A."/>
            <person name="Latorre D."/>
            <person name="Simonatto M."/>
            <person name="Fusella A."/>
            <person name="Ryall J.G."/>
            <person name="Finley L.W."/>
            <person name="Haigis M.C."/>
            <person name="Villani G."/>
            <person name="Puri P.L."/>
            <person name="Sartorelli V."/>
            <person name="Simone C."/>
        </authorList>
    </citation>
    <scope>FUNCTION</scope>
    <scope>IDENTIFICATION IN A COMPLEX WITH SIRT3 AND POLRMT</scope>
    <scope>SUBCELLULAR LOCATION</scope>
    <scope>ACETYLATION</scope>
</reference>
<reference key="25">
    <citation type="journal article" date="2013" name="Elife">
        <title>CAMKII and Calcineurin regulate the lifespan of Caenorhabditis elegans through the FOXO transcription factor DAF-16.</title>
        <authorList>
            <person name="Tao L."/>
            <person name="Xie Q."/>
            <person name="Ding Y.H."/>
            <person name="Li S.T."/>
            <person name="Peng S."/>
            <person name="Zhang Y.P."/>
            <person name="Tan D."/>
            <person name="Yuan Z."/>
            <person name="Dong M.Q."/>
        </authorList>
    </citation>
    <scope>PHOSPHORYLATION AT SER-299</scope>
    <scope>IDENTIFICATION BY MASS SPECTROMETRY</scope>
</reference>
<reference key="26">
    <citation type="journal article" date="2013" name="J. Proteome Res.">
        <title>Toward a comprehensive characterization of a human cancer cell phosphoproteome.</title>
        <authorList>
            <person name="Zhou H."/>
            <person name="Di Palma S."/>
            <person name="Preisinger C."/>
            <person name="Peng M."/>
            <person name="Polat A.N."/>
            <person name="Heck A.J."/>
            <person name="Mohammed S."/>
        </authorList>
    </citation>
    <scope>PHOSPHORYLATION [LARGE SCALE ANALYSIS] AT SER-280; SER-284; SER-299; SER-311; SER-413 AND SER-551</scope>
    <scope>IDENTIFICATION BY MASS SPECTROMETRY [LARGE SCALE ANALYSIS]</scope>
    <source>
        <tissue>Cervix carcinoma</tissue>
        <tissue>Erythroleukemia</tissue>
    </source>
</reference>
<reference key="27">
    <citation type="journal article" date="2018" name="Cell Death Dis.">
        <title>Uncoupling FoxO3A mitochondrial and nuclear functions in cancer cells undergoing metabolic stress and chemotherapy.</title>
        <authorList>
            <person name="Celestini V."/>
            <person name="Tezil T."/>
            <person name="Russo L."/>
            <person name="Fasano C."/>
            <person name="Sanese P."/>
            <person name="Forte G."/>
            <person name="Peserico A."/>
            <person name="Lepore Signorile M."/>
            <person name="Longo G."/>
            <person name="De Rasmo D."/>
            <person name="Signorile A."/>
            <person name="Gadaleta R.M."/>
            <person name="Scialpi N."/>
            <person name="Terao M."/>
            <person name="Garattini E."/>
            <person name="Cocco T."/>
            <person name="Villani G."/>
            <person name="Moschetta A."/>
            <person name="Grossi V."/>
            <person name="Simone C."/>
        </authorList>
    </citation>
    <scope>IDENTIFICATION IN A COMPLEX WITH SIRT3; TFAM AND POLRMT</scope>
    <scope>SUBCELLULAR LOCATION</scope>
    <scope>PROTEOLYTIC CLEAVAGE</scope>
    <scope>PHOSPHORYLATION AT SER-30</scope>
    <scope>NUCLEAR LOCALIZATION SIGNAL</scope>
    <scope>MUTAGENESIS OF 2-ALA--SER-30; 2-ALA--ARG-148; SER-12; SER-30; 80-GLY--PRO-108 AND 241-LYS--LYS-271</scope>
</reference>
<reference key="28">
    <citation type="journal article" date="2018" name="Dev. Cell">
        <title>AMBRA1 controls regulatory T-cell differentiation and homeostasis upstream of the FOXO3-FOXP3 axis.</title>
        <authorList>
            <person name="Becher J."/>
            <person name="Simula L."/>
            <person name="Volpe E."/>
            <person name="Procaccini C."/>
            <person name="La Rocca C."/>
            <person name="D'Acunzo P."/>
            <person name="Cianfanelli V."/>
            <person name="Strappazzon F."/>
            <person name="Caruana I."/>
            <person name="Nazio F."/>
            <person name="Weber G."/>
            <person name="Gigantino V."/>
            <person name="Botti G."/>
            <person name="Ciccosanti F."/>
            <person name="Borsellino G."/>
            <person name="Campello S."/>
            <person name="Mandolesi G."/>
            <person name="De Bardi M."/>
            <person name="Fimia G.M."/>
            <person name="D'Amelio M."/>
            <person name="Ruffini F."/>
            <person name="Furlan R."/>
            <person name="Centonze D."/>
            <person name="Martino G."/>
            <person name="Braghetta P."/>
            <person name="Chrisam M."/>
            <person name="Bonaldo P."/>
            <person name="Matarese G."/>
            <person name="Locatelli F."/>
            <person name="Battistini L."/>
            <person name="Cecconi F."/>
        </authorList>
    </citation>
    <scope>FUNCTION</scope>
    <scope>PHOSPHORYLATION AT SER-253 AND SER-294</scope>
    <scope>DEPHOSPHORYLATION</scope>
</reference>
<reference key="29">
    <citation type="journal article" date="2007" name="Nucleic Acids Res.">
        <title>Crystal structure of the human FOXO3a-DBD/DNA complex suggests the effects of post-translational modification.</title>
        <authorList>
            <person name="Tsai K.-L."/>
            <person name="Sun Y.-J."/>
            <person name="Huang C.-Y."/>
            <person name="Yang J.-Y."/>
            <person name="Hung M.-C."/>
            <person name="Hsiao C.-D."/>
        </authorList>
    </citation>
    <scope>X-RAY CRYSTALLOGRAPHY (2.7 ANGSTROMS) OF 158-253 IN COMPLEX WITH DNA</scope>
    <scope>MUTAGENESIS OF LYS-242 AND LYS-245</scope>
    <scope>NUCLEAR LOCALIZATION SIGNAL</scope>
</reference>
<evidence type="ECO:0000250" key="1">
    <source>
        <dbReference type="UniProtKB" id="Q9WVH4"/>
    </source>
</evidence>
<evidence type="ECO:0000255" key="2">
    <source>
        <dbReference type="PROSITE-ProRule" id="PRU00089"/>
    </source>
</evidence>
<evidence type="ECO:0000256" key="3">
    <source>
        <dbReference type="SAM" id="MobiDB-lite"/>
    </source>
</evidence>
<evidence type="ECO:0000269" key="4">
    <source>
    </source>
</evidence>
<evidence type="ECO:0000269" key="5">
    <source>
    </source>
</evidence>
<evidence type="ECO:0000269" key="6">
    <source>
    </source>
</evidence>
<evidence type="ECO:0000269" key="7">
    <source>
    </source>
</evidence>
<evidence type="ECO:0000269" key="8">
    <source>
    </source>
</evidence>
<evidence type="ECO:0000269" key="9">
    <source>
    </source>
</evidence>
<evidence type="ECO:0000269" key="10">
    <source>
    </source>
</evidence>
<evidence type="ECO:0000269" key="11">
    <source>
    </source>
</evidence>
<evidence type="ECO:0000269" key="12">
    <source>
    </source>
</evidence>
<evidence type="ECO:0000269" key="13">
    <source>
    </source>
</evidence>
<evidence type="ECO:0000269" key="14">
    <source>
    </source>
</evidence>
<evidence type="ECO:0000269" key="15">
    <source>
    </source>
</evidence>
<evidence type="ECO:0000269" key="16">
    <source>
    </source>
</evidence>
<evidence type="ECO:0000269" key="17">
    <source>
    </source>
</evidence>
<evidence type="ECO:0000269" key="18">
    <source>
    </source>
</evidence>
<evidence type="ECO:0000269" key="19">
    <source>
    </source>
</evidence>
<evidence type="ECO:0000269" key="20">
    <source>
    </source>
</evidence>
<evidence type="ECO:0000269" key="21">
    <source>
    </source>
</evidence>
<evidence type="ECO:0000303" key="22">
    <source>
    </source>
</evidence>
<evidence type="ECO:0000303" key="23">
    <source>
    </source>
</evidence>
<evidence type="ECO:0000303" key="24">
    <source>
    </source>
</evidence>
<evidence type="ECO:0000303" key="25">
    <source>
    </source>
</evidence>
<evidence type="ECO:0000305" key="26"/>
<evidence type="ECO:0000312" key="27">
    <source>
        <dbReference type="HGNC" id="HGNC:3821"/>
    </source>
</evidence>
<evidence type="ECO:0007744" key="28">
    <source>
    </source>
</evidence>
<evidence type="ECO:0007744" key="29">
    <source>
    </source>
</evidence>
<evidence type="ECO:0007744" key="30">
    <source>
    </source>
</evidence>
<evidence type="ECO:0007744" key="31">
    <source>
    </source>
</evidence>
<evidence type="ECO:0007829" key="32">
    <source>
        <dbReference type="PDB" id="2K86"/>
    </source>
</evidence>
<evidence type="ECO:0007829" key="33">
    <source>
        <dbReference type="PDB" id="2LQH"/>
    </source>
</evidence>
<evidence type="ECO:0007829" key="34">
    <source>
        <dbReference type="PDB" id="2UZK"/>
    </source>
</evidence>
<feature type="chain" id="PRO_0000091874" description="Forkhead box protein O3">
    <location>
        <begin position="1"/>
        <end position="673"/>
    </location>
</feature>
<feature type="DNA-binding region" description="Fork-head" evidence="2">
    <location>
        <begin position="157"/>
        <end position="251"/>
    </location>
</feature>
<feature type="region of interest" description="Disordered" evidence="3">
    <location>
        <begin position="1"/>
        <end position="153"/>
    </location>
</feature>
<feature type="region of interest" description="Required for mitochondrial import" evidence="17">
    <location>
        <begin position="80"/>
        <end position="108"/>
    </location>
</feature>
<feature type="region of interest" description="Disordered" evidence="3">
    <location>
        <begin position="231"/>
        <end position="302"/>
    </location>
</feature>
<feature type="region of interest" description="Mediates interaction with CHUK/IKKA and IKBKB/IKKB" evidence="6">
    <location>
        <begin position="300"/>
        <end position="673"/>
    </location>
</feature>
<feature type="region of interest" description="Disordered" evidence="3">
    <location>
        <begin position="536"/>
        <end position="587"/>
    </location>
</feature>
<feature type="short sequence motif" description="Nuclear localization signal" evidence="9 19">
    <location>
        <begin position="242"/>
        <end position="259"/>
    </location>
</feature>
<feature type="compositionally biased region" description="Acidic residues" evidence="3">
    <location>
        <begin position="57"/>
        <end position="68"/>
    </location>
</feature>
<feature type="compositionally biased region" description="Gly residues" evidence="3">
    <location>
        <begin position="79"/>
        <end position="89"/>
    </location>
</feature>
<feature type="compositionally biased region" description="Basic residues" evidence="3">
    <location>
        <begin position="261"/>
        <end position="272"/>
    </location>
</feature>
<feature type="compositionally biased region" description="Polar residues" evidence="3">
    <location>
        <begin position="283"/>
        <end position="298"/>
    </location>
</feature>
<feature type="compositionally biased region" description="Polar residues" evidence="3">
    <location>
        <begin position="549"/>
        <end position="582"/>
    </location>
</feature>
<feature type="modified residue" description="Phosphoserine; by AMPK" evidence="19">
    <location>
        <position position="30"/>
    </location>
</feature>
<feature type="modified residue" description="Phosphothreonine; by PKB/AKT1" evidence="4">
    <location>
        <position position="32"/>
    </location>
</feature>
<feature type="modified residue" description="N6-methyllysine" evidence="16">
    <location>
        <position position="46"/>
    </location>
</feature>
<feature type="modified residue" description="N6-methyllysine" evidence="16">
    <location>
        <position position="149"/>
    </location>
</feature>
<feature type="modified residue" description="Phosphothreonine; by AMPK" evidence="8">
    <location>
        <position position="179"/>
    </location>
</feature>
<feature type="modified residue" description="Phosphoserine; by STK4/MST1" evidence="7">
    <location>
        <position position="209"/>
    </location>
</feature>
<feature type="modified residue" description="Phosphoserine; by MAPKAPK5" evidence="12">
    <location>
        <position position="215"/>
    </location>
</feature>
<feature type="modified residue" description="N6-methyllysine" evidence="16">
    <location>
        <position position="230"/>
    </location>
</feature>
<feature type="modified residue" description="N6-acetyllysine" evidence="1">
    <location>
        <position position="242"/>
    </location>
</feature>
<feature type="modified residue" description="Phosphoserine; by PKB/AKT1 and MAPKAPK5" evidence="4 12 20">
    <location>
        <position position="253"/>
    </location>
</feature>
<feature type="modified residue" description="N6-methyllysine" evidence="16">
    <location>
        <position position="262"/>
    </location>
</feature>
<feature type="modified residue" description="N6-methyllysine" evidence="16">
    <location>
        <position position="271"/>
    </location>
</feature>
<feature type="modified residue" description="Phosphoserine" evidence="29 30 31">
    <location>
        <position position="280"/>
    </location>
</feature>
<feature type="modified residue" description="Phosphoserine" evidence="29 31">
    <location>
        <position position="284"/>
    </location>
</feature>
<feature type="modified residue" description="N6-methyllysine" evidence="16">
    <location>
        <position position="290"/>
    </location>
</feature>
<feature type="modified residue" description="Phosphoserine" evidence="20">
    <location>
        <position position="294"/>
    </location>
</feature>
<feature type="modified residue" description="Phosphoserine; by CaMK2A" evidence="18 31">
    <location>
        <position position="299"/>
    </location>
</feature>
<feature type="modified residue" description="Phosphoserine" evidence="31">
    <location>
        <position position="311"/>
    </location>
</feature>
<feature type="modified residue" description="Phosphoserine; by SGK1" evidence="4 5">
    <location>
        <position position="315"/>
    </location>
</feature>
<feature type="modified residue" description="Phosphoserine; by AMPK" evidence="8">
    <location>
        <position position="399"/>
    </location>
</feature>
<feature type="modified residue" description="Phosphoserine; by AMPK" evidence="8 31">
    <location>
        <position position="413"/>
    </location>
</feature>
<feature type="modified residue" description="N6-methyllysine" evidence="16">
    <location>
        <position position="419"/>
    </location>
</feature>
<feature type="modified residue" description="Phosphoserine" evidence="28">
    <location>
        <position position="421"/>
    </location>
</feature>
<feature type="modified residue" description="Phosphoserine; by MAPKAPK5" evidence="12 31">
    <location>
        <position position="551"/>
    </location>
</feature>
<feature type="modified residue" description="Phosphoserine; by AMPK and MAPKAPK5" evidence="8 12">
    <location>
        <position position="555"/>
    </location>
</feature>
<feature type="modified residue" description="Phosphoserine; by AMPK" evidence="8">
    <location>
        <position position="588"/>
    </location>
</feature>
<feature type="modified residue" description="Phosphoserine; by AMPK" evidence="8">
    <location>
        <position position="626"/>
    </location>
</feature>
<feature type="modified residue" description="Phosphoserine; by IKKB" evidence="6">
    <location>
        <position position="644"/>
    </location>
</feature>
<feature type="splice variant" id="VSP_056225" description="In isoform 2." evidence="23">
    <location>
        <begin position="1"/>
        <end position="220"/>
    </location>
</feature>
<feature type="mutagenesis site" description="Loss of localization to the mitochondrion outer membrane and loss of translocation into the mitochondrion following metabolic stress." evidence="19">
    <location>
        <begin position="2"/>
        <end position="148"/>
    </location>
</feature>
<feature type="mutagenesis site" description="Loss of translocation into the mitochondrion following metabolic stress." evidence="19">
    <location>
        <begin position="2"/>
        <end position="30"/>
    </location>
</feature>
<feature type="mutagenesis site" description="In normal cells, no defect in mitochondrion import following metabolic stress. In cancer cells, defective mitochondrion import following metabolic stress and abolition of ERK-mediated phosphorylation." evidence="19">
    <original>S</original>
    <variation>A</variation>
    <location>
        <position position="12"/>
    </location>
</feature>
<feature type="mutagenesis site" description="Abolishes phosphorylation. Loss of localization to the mitochondrion outer membrane and loss of translocation into the mitochondrion following metabolic stress." evidence="19">
    <original>S</original>
    <variation>A</variation>
    <location>
        <position position="30"/>
    </location>
</feature>
<feature type="mutagenesis site" description="Abolishes YWHAZ-binding; when associated with A-253. Exclusively nuclear, induces transcription and promotes apoptosis; when associated with A-253 and A-315." evidence="4">
    <original>T</original>
    <variation>A</variation>
    <location>
        <position position="32"/>
    </location>
</feature>
<feature type="mutagenesis site" description="Loss of translocation into the mitochondrion following metabolic stress." evidence="19">
    <location>
        <begin position="80"/>
        <end position="108"/>
    </location>
</feature>
<feature type="mutagenesis site" description="Decreased phosphorylation by AMPK and impaired ability to transactivate a reporter gene; when associated with A-399; A-413; A-555; A-588 and A-626." evidence="8">
    <original>T</original>
    <variation>A</variation>
    <location>
        <position position="179"/>
    </location>
</feature>
<feature type="mutagenesis site" description="Impairs nuclear translocation upon oxidative stress." evidence="7">
    <original>S</original>
    <variation>A</variation>
    <location>
        <position position="209"/>
    </location>
</feature>
<feature type="mutagenesis site" description="Loss of nuclear import." evidence="19">
    <location>
        <begin position="242"/>
        <end position="271"/>
    </location>
</feature>
<feature type="mutagenesis site" description="Slightly decreases DNA affinity." evidence="9 13">
    <original>K</original>
    <variation>A</variation>
    <location>
        <position position="242"/>
    </location>
</feature>
<feature type="mutagenesis site" description="Reduces acetylation, increases interaction with SKP2 and inhibits FOXO3 ubiquitination and degradation; when associated with R-259; R-290 and R-569." evidence="9 13">
    <original>K</original>
    <variation>R</variation>
    <location>
        <position position="242"/>
    </location>
</feature>
<feature type="mutagenesis site" description="Decreases DNA affinity." evidence="9">
    <original>K</original>
    <variation>A</variation>
    <location>
        <position position="245"/>
    </location>
</feature>
<feature type="mutagenesis site" description="Abolishes YWHAZ-binding; when associated with A-32. Exclusively nuclear, induces transcription and promotes apoptosis; when associated with A-32 and A-315." evidence="4">
    <original>S</original>
    <variation>A</variation>
    <location>
        <position position="253"/>
    </location>
</feature>
<feature type="mutagenesis site" description="Reduces acetylation, increases interaction with SKP2 and inhibits FOXO3 ubiquitination and degradation; when associated with R-242; R-290 and R-569." evidence="13">
    <original>K</original>
    <variation>R</variation>
    <location>
        <position position="259"/>
    </location>
</feature>
<feature type="mutagenesis site" description="Methylation levels similar to wild-type; when associated with Arg-270." evidence="16">
    <original>K</original>
    <variation>R</variation>
    <location>
        <position position="269"/>
    </location>
</feature>
<feature type="mutagenesis site" description="Methylation levels similar to wild-type; when associated with Arg-269." evidence="16">
    <original>K</original>
    <variation>R</variation>
    <location>
        <position position="270"/>
    </location>
</feature>
<feature type="mutagenesis site" description="Methylation levels strongly reduced." evidence="16">
    <original>K</original>
    <variation>R</variation>
    <location>
        <position position="271"/>
    </location>
</feature>
<feature type="mutagenesis site" description="Reduces acetylation, increases interaction with SKP2 and inhibits FOXO3 ubiquitination and degradation; when associated with R-242; R-259 and R-569." evidence="13">
    <original>K</original>
    <variation>R</variation>
    <location>
        <position position="290"/>
    </location>
</feature>
<feature type="mutagenesis site" description="No effect on YWHAZ-binding. Promotes nuclear translocation. Exclusively nuclear, induces transcription and promotes apoptosis; when associated with A-32 and A-253." evidence="4">
    <original>S</original>
    <variation>A</variation>
    <location>
        <position position="315"/>
    </location>
</feature>
<feature type="mutagenesis site" description="Decreased phosphorylation by AMPK and impaired ability to transactivate a reporter gene; when associated with A-179; A-413; A-555; A-588 and A-626." evidence="8">
    <original>S</original>
    <variation>A</variation>
    <location>
        <position position="399"/>
    </location>
</feature>
<feature type="mutagenesis site" description="Decreased phosphorylation by AMPK and impaired ability to transactivate a reporter gene; when associated with A-179; A-399; A-555; A-588 and A-626." evidence="8">
    <original>S</original>
    <variation>A</variation>
    <location>
        <position position="413"/>
    </location>
</feature>
<feature type="mutagenesis site" description="Decreased phosphorylation by AMPK and impaired ability to transactivate a reporter gene; when associated with A-179; A-399; A-413; A-588 and A-626." evidence="8">
    <original>S</original>
    <variation>A</variation>
    <location>
        <position position="555"/>
    </location>
</feature>
<feature type="mutagenesis site" description="Reduces acetylation, increases interaction with SKP2 and inhibits FOXO3 ubiquitination and degradation; when associated with R-242; R-259 and R-290." evidence="13">
    <original>K</original>
    <variation>R</variation>
    <location>
        <position position="569"/>
    </location>
</feature>
<feature type="mutagenesis site" description="Decreased phosphorylation by AMPK and impaired ability to transactivate a reporter gene; when associated with A-179; A-399; A-413; A-555 and A-626." evidence="8">
    <original>S</original>
    <variation>A</variation>
    <location>
        <position position="588"/>
    </location>
</feature>
<feature type="mutagenesis site" description="Decreased phosphorylation by AMPK and impaired ability to transactivate a reporter gene; when associated with A-179; A-399; A-413; A-555 and A-588." evidence="8">
    <original>S</original>
    <variation>A</variation>
    <location>
        <position position="626"/>
    </location>
</feature>
<feature type="mutagenesis site" description="Loss of phosphorylation by IKKB." evidence="6">
    <original>S</original>
    <variation>A</variation>
    <location>
        <position position="644"/>
    </location>
</feature>
<feature type="sequence conflict" description="In Ref. 6; CAA04860." evidence="26" ref="6">
    <original>AWGNLSYA</original>
    <variation>WGKPVYS</variation>
    <location>
        <begin position="156"/>
        <end position="163"/>
    </location>
</feature>
<feature type="sequence conflict" description="In Ref. 6; CAA04860." evidence="26" ref="6">
    <original>PDGGKSGKA</original>
    <variation>LMGEERKT</variation>
    <location>
        <begin position="238"/>
        <end position="246"/>
    </location>
</feature>
<feature type="sequence conflict" description="In Ref. 6; CAA04860." evidence="26" ref="6">
    <original>S</original>
    <variation>T</variation>
    <location>
        <position position="253"/>
    </location>
</feature>
<feature type="sequence conflict" description="In Ref. 6; CAA04860." evidence="26" ref="6">
    <location>
        <position position="271"/>
    </location>
</feature>
<feature type="sequence conflict" description="In Ref. 6; CAA04860." evidence="26" ref="6">
    <original>PGSPTSRSSDELDAWTDFRSRTNSNASTVSGRLSPIMAS</original>
    <variation>AWQPHVNAAVMSWMRGRTSVHAPILTPAQSVAACRPSWQV</variation>
    <location>
        <begin position="292"/>
        <end position="330"/>
    </location>
</feature>
<feature type="sequence conflict" description="In Ref. 6; CAA04860." evidence="26" ref="6">
    <original>PMLYSSSASLSPSVSKP</original>
    <variation>AHALQHVSQPVTFSKQA</variation>
    <location>
        <begin position="345"/>
        <end position="361"/>
    </location>
</feature>
<feature type="sequence conflict" description="In Ref. 6; CAA04860." evidence="26" ref="6">
    <original>P</original>
    <variation>R</variation>
    <location>
        <position position="367"/>
    </location>
</feature>
<feature type="sequence conflict" description="In Ref. 6; CAA04860." evidence="26" ref="6">
    <original>D</original>
    <variation>E</variation>
    <location>
        <position position="371"/>
    </location>
</feature>
<feature type="sequence conflict" description="In Ref. 6; CAA04860." evidence="26" ref="6">
    <original>LT</original>
    <variation>AD</variation>
    <location>
        <begin position="382"/>
        <end position="383"/>
    </location>
</feature>
<feature type="turn" evidence="32">
    <location>
        <begin position="156"/>
        <end position="158"/>
    </location>
</feature>
<feature type="helix" evidence="34">
    <location>
        <begin position="162"/>
        <end position="169"/>
    </location>
</feature>
<feature type="strand" evidence="34">
    <location>
        <begin position="172"/>
        <end position="176"/>
    </location>
</feature>
<feature type="helix" evidence="34">
    <location>
        <begin position="180"/>
        <end position="189"/>
    </location>
</feature>
<feature type="strand" evidence="34">
    <location>
        <begin position="198"/>
        <end position="200"/>
    </location>
</feature>
<feature type="helix" evidence="34">
    <location>
        <begin position="206"/>
        <end position="216"/>
    </location>
</feature>
<feature type="strand" evidence="34">
    <location>
        <begin position="217"/>
        <end position="229"/>
    </location>
</feature>
<feature type="strand" evidence="34">
    <location>
        <begin position="233"/>
        <end position="236"/>
    </location>
</feature>
<feature type="strand" evidence="32">
    <location>
        <begin position="238"/>
        <end position="240"/>
    </location>
</feature>
<feature type="strand" evidence="33">
    <location>
        <begin position="463"/>
        <end position="465"/>
    </location>
</feature>
<feature type="helix" evidence="33">
    <location>
        <begin position="468"/>
        <end position="477"/>
    </location>
</feature>
<feature type="turn" evidence="33">
    <location>
        <begin position="478"/>
        <end position="480"/>
    </location>
</feature>
<organism>
    <name type="scientific">Homo sapiens</name>
    <name type="common">Human</name>
    <dbReference type="NCBI Taxonomy" id="9606"/>
    <lineage>
        <taxon>Eukaryota</taxon>
        <taxon>Metazoa</taxon>
        <taxon>Chordata</taxon>
        <taxon>Craniata</taxon>
        <taxon>Vertebrata</taxon>
        <taxon>Euteleostomi</taxon>
        <taxon>Mammalia</taxon>
        <taxon>Eutheria</taxon>
        <taxon>Euarchontoglires</taxon>
        <taxon>Primates</taxon>
        <taxon>Haplorrhini</taxon>
        <taxon>Catarrhini</taxon>
        <taxon>Hominidae</taxon>
        <taxon>Homo</taxon>
    </lineage>
</organism>
<keyword id="KW-0002">3D-structure</keyword>
<keyword id="KW-0007">Acetylation</keyword>
<keyword id="KW-0010">Activator</keyword>
<keyword id="KW-0025">Alternative splicing</keyword>
<keyword id="KW-0053">Apoptosis</keyword>
<keyword id="KW-0160">Chromosomal rearrangement</keyword>
<keyword id="KW-0963">Cytoplasm</keyword>
<keyword id="KW-0238">DNA-binding</keyword>
<keyword id="KW-0472">Membrane</keyword>
<keyword id="KW-0488">Methylation</keyword>
<keyword id="KW-0496">Mitochondrion</keyword>
<keyword id="KW-1000">Mitochondrion outer membrane</keyword>
<keyword id="KW-0539">Nucleus</keyword>
<keyword id="KW-0597">Phosphoprotein</keyword>
<keyword id="KW-1267">Proteomics identification</keyword>
<keyword id="KW-0656">Proto-oncogene</keyword>
<keyword id="KW-1185">Reference proteome</keyword>
<keyword id="KW-0804">Transcription</keyword>
<keyword id="KW-0805">Transcription regulation</keyword>
<keyword id="KW-0832">Ubl conjugation</keyword>
<protein>
    <recommendedName>
        <fullName evidence="26">Forkhead box protein O3</fullName>
    </recommendedName>
    <alternativeName>
        <fullName evidence="24">AF6q21 protein</fullName>
    </alternativeName>
    <alternativeName>
        <fullName evidence="25">Forkhead in rhabdomyosarcoma-like 1</fullName>
    </alternativeName>
</protein>
<comment type="function">
    <text evidence="1 4 7 12 17 20">Transcriptional activator that recognizes and binds to the DNA sequence 5'-[AG]TAAA[TC]A-3' and regulates different processes, such as apoptosis and autophagy (PubMed:10102273, PubMed:16751106, PubMed:21329882, PubMed:30513302). Acts as a positive regulator of autophagy in skeletal muscle: in starved cells, enters the nucleus following dephosphorylation and binds the promoters of autophagy genes, such as GABARAP1L, MAP1LC3B and ATG12, thereby activating their expression, resulting in proteolysis of skeletal muscle proteins (By similarity). Triggers apoptosis in the absence of survival factors, including neuronal cell death upon oxidative stress (PubMed:10102273, PubMed:16751106). Participates in post-transcriptional regulation of MYC: following phosphorylation by MAPKAPK5, promotes induction of miR-34b and miR-34c expression, 2 post-transcriptional regulators of MYC that bind to the 3'UTR of MYC transcript and prevent its translation (PubMed:21329882). In response to metabolic stress, translocates into the mitochondria where it promotes mtDNA transcription (PubMed:23283301). In response to metabolic stress, translocates into the mitochondria where it promotes mtDNA transcription. Also acts as a key regulator of chondrogenic commitment of skeletal progenitor cells in response to lipid availability: when lipids levels are low, translocates to the nucleus and promotes expression of SOX9, which induces chondrogenic commitment and suppresses fatty acid oxidation (By similarity). Also acts as a key regulator of regulatory T-cells (Treg) differentiation by activating expression of FOXP3 (PubMed:30513302).</text>
</comment>
<comment type="subunit">
    <text evidence="1 6 7 10 11 13 14 15 17 19">Upon metabolic stress, forms a complex composed of FOXO3, SIRT3 and mitochondrial RNA polymerase POLRMT; the complex is recruited to mtDNA in a SIRT3-dependent manner (PubMed:23283301). Also forms a complex composed of FOXO3, SIRT3, TFAM and POLRMT (PubMed:29445193). Interacts with SIRT2; the interaction occurs independently of SIRT2 deacetylase activity (By similarity). Interacts with YWHAB/14-3-3-beta and YWHAZ/14-3-3-zeta, which are required for cytosolic sequestration (PubMed:16751106). Upon oxidative stress, interacts with STK4/MST1, which disrupts interaction with YWHAB/14-3-3-beta and leads to nuclear translocation (PubMed:16751106). Interacts with PIM1 (PubMed:18593906). Interacts with DDIT3/CHOP (PubMed:22761832). Interacts (deacetylated form) with SKP2 (PubMed:21841822). Interacts with CHUK and IKBKB (PubMed:15084260, PubMed:22313691). Interacts with CAMK2A, CAMK2B and calcineurin A (By similarity). Interacts with NUPR1; this interaction represses FOXO3 transactivation (PubMed:20181828).</text>
</comment>
<comment type="interaction">
    <interactant intactId="EBI-1644164">
        <id>O43524</id>
    </interactant>
    <interactant intactId="EBI-296087">
        <id>P31749</id>
        <label>AKT1</label>
    </interactant>
    <organismsDiffer>false</organismsDiffer>
    <experiments>3</experiments>
</comment>
<comment type="interaction">
    <interactant intactId="EBI-1644164">
        <id>O43524</id>
    </interactant>
    <interactant intactId="EBI-302405">
        <id>Q92974</id>
        <label>ARHGEF2</label>
    </interactant>
    <organismsDiffer>false</organismsDiffer>
    <experiments>2</experiments>
</comment>
<comment type="interaction">
    <interactant intactId="EBI-1644164">
        <id>O43524</id>
    </interactant>
    <interactant intactId="EBI-994813">
        <id>P30260</id>
        <label>CDC27</label>
    </interactant>
    <organismsDiffer>false</organismsDiffer>
    <experiments>2</experiments>
</comment>
<comment type="interaction">
    <interactant intactId="EBI-1644164">
        <id>O43524</id>
    </interactant>
    <interactant intactId="EBI-81215">
        <id>Q92793</id>
        <label>CREBBP</label>
    </interactant>
    <organismsDiffer>false</organismsDiffer>
    <experiments>3</experiments>
</comment>
<comment type="interaction">
    <interactant intactId="EBI-1644164">
        <id>O43524</id>
    </interactant>
    <interactant intactId="EBI-78473">
        <id>P03372</id>
        <label>ESR1</label>
    </interactant>
    <organismsDiffer>false</organismsDiffer>
    <experiments>7</experiments>
</comment>
<comment type="interaction">
    <interactant intactId="EBI-1644164">
        <id>O43524</id>
    </interactant>
    <interactant intactId="EBI-78505">
        <id>Q92731</id>
        <label>ESR2</label>
    </interactant>
    <organismsDiffer>false</organismsDiffer>
    <experiments>4</experiments>
</comment>
<comment type="interaction">
    <interactant intactId="EBI-1644164">
        <id>O43524</id>
    </interactant>
    <interactant intactId="EBI-2509974">
        <id>P85037</id>
        <label>FOXK1</label>
    </interactant>
    <organismsDiffer>false</organismsDiffer>
    <experiments>2</experiments>
</comment>
<comment type="interaction">
    <interactant intactId="EBI-1644164">
        <id>O43524</id>
    </interactant>
    <interactant intactId="EBI-866480">
        <id>Q08050</id>
        <label>FOXM1</label>
    </interactant>
    <organismsDiffer>false</organismsDiffer>
    <experiments>2</experiments>
</comment>
<comment type="interaction">
    <interactant intactId="EBI-1644164">
        <id>O43524</id>
    </interactant>
    <interactant intactId="EBI-396176">
        <id>P51610</id>
        <label>HCFC1</label>
    </interactant>
    <organismsDiffer>false</organismsDiffer>
    <experiments>2</experiments>
</comment>
<comment type="interaction">
    <interactant intactId="EBI-1644164">
        <id>O43524</id>
    </interactant>
    <interactant intactId="EBI-447544">
        <id>P01106</id>
        <label>MYC</label>
    </interactant>
    <organismsDiffer>false</organismsDiffer>
    <experiments>3</experiments>
</comment>
<comment type="interaction">
    <interactant intactId="EBI-1644164">
        <id>O43524</id>
    </interactant>
    <interactant intactId="EBI-1018629">
        <id>P11309-1</id>
        <label>PIM1</label>
    </interactant>
    <organismsDiffer>false</organismsDiffer>
    <experiments>2</experiments>
</comment>
<comment type="interaction">
    <interactant intactId="EBI-1644164">
        <id>O43524</id>
    </interactant>
    <interactant intactId="EBI-1045072">
        <id>Q96T60</id>
        <label>PNKP</label>
    </interactant>
    <organismsDiffer>false</organismsDiffer>
    <experiments>2</experiments>
</comment>
<comment type="interaction">
    <interactant intactId="EBI-1644164">
        <id>O43524</id>
    </interactant>
    <interactant intactId="EBI-491274">
        <id>P06400</id>
        <label>RB1</label>
    </interactant>
    <organismsDiffer>false</organismsDiffer>
    <experiments>2</experiments>
</comment>
<comment type="interaction">
    <interactant intactId="EBI-1644164">
        <id>O43524</id>
    </interactant>
    <interactant intactId="EBI-971402">
        <id>P28749</id>
        <label>RBL1</label>
    </interactant>
    <organismsDiffer>false</organismsDiffer>
    <experiments>3</experiments>
</comment>
<comment type="interaction">
    <interactant intactId="EBI-1644164">
        <id>O43524</id>
    </interactant>
    <interactant intactId="EBI-476295">
        <id>P31947</id>
        <label>SFN</label>
    </interactant>
    <organismsDiffer>false</organismsDiffer>
    <experiments>3</experiments>
</comment>
<comment type="interaction">
    <interactant intactId="EBI-1644164">
        <id>O43524</id>
    </interactant>
    <interactant intactId="EBI-1802965">
        <id>Q96EB6</id>
        <label>SIRT1</label>
    </interactant>
    <organismsDiffer>false</organismsDiffer>
    <experiments>5</experiments>
</comment>
<comment type="interaction">
    <interactant intactId="EBI-1644164">
        <id>O43524</id>
    </interactant>
    <interactant intactId="EBI-347161">
        <id>P84022</id>
        <label>SMAD3</label>
    </interactant>
    <organismsDiffer>false</organismsDiffer>
    <experiments>5</experiments>
</comment>
<comment type="interaction">
    <interactant intactId="EBI-1644164">
        <id>O43524</id>
    </interactant>
    <interactant intactId="EBI-347263">
        <id>Q13485</id>
        <label>SMAD4</label>
    </interactant>
    <organismsDiffer>false</organismsDiffer>
    <experiments>9</experiments>
</comment>
<comment type="interaction">
    <interactant intactId="EBI-1644164">
        <id>O43524</id>
    </interactant>
    <interactant intactId="EBI-1785876">
        <id>O75529</id>
        <label>TAF5L</label>
    </interactant>
    <organismsDiffer>false</organismsDiffer>
    <experiments>2</experiments>
</comment>
<comment type="interaction">
    <interactant intactId="EBI-1644164">
        <id>O43524</id>
    </interactant>
    <interactant intactId="EBI-356498">
        <id>P62258</id>
        <label>YWHAE</label>
    </interactant>
    <organismsDiffer>false</organismsDiffer>
    <experiments>5</experiments>
</comment>
<comment type="interaction">
    <interactant intactId="EBI-1644164">
        <id>O43524</id>
    </interactant>
    <interactant intactId="EBI-347088">
        <id>P63104</id>
        <label>YWHAZ</label>
    </interactant>
    <organismsDiffer>false</organismsDiffer>
    <experiments>6</experiments>
</comment>
<comment type="interaction">
    <interactant intactId="EBI-1644164">
        <id>O43524</id>
    </interactant>
    <interactant intactId="EBI-11166131">
        <id>Q60987</id>
        <label>Foxg1</label>
    </interactant>
    <organismsDiffer>true</organismsDiffer>
    <experiments>5</experiments>
</comment>
<comment type="interaction">
    <interactant intactId="EBI-1644164">
        <id>O43524</id>
    </interactant>
    <interactant intactId="EBI-354751">
        <id>P63101</id>
        <label>Ywhaz</label>
    </interactant>
    <organismsDiffer>true</organismsDiffer>
    <experiments>2</experiments>
</comment>
<comment type="subcellular location">
    <subcellularLocation>
        <location evidence="4 6 7 8 12 14 15 17">Cytoplasm</location>
        <location evidence="4 6 7 8 12 14 15 17">Cytosol</location>
    </subcellularLocation>
    <subcellularLocation>
        <location evidence="4 6 7 8 12 14 15 17 19">Nucleus</location>
    </subcellularLocation>
    <subcellularLocation>
        <location evidence="17 19">Mitochondrion matrix</location>
    </subcellularLocation>
    <subcellularLocation>
        <location evidence="19">Mitochondrion outer membrane</location>
        <topology evidence="19">Peripheral membrane protein</topology>
        <orientation evidence="19">Cytoplasmic side</orientation>
    </subcellularLocation>
    <text evidence="1 4 6 7 17 19">Retention in the cytoplasm contributes to its inactivation (PubMed:10102273, PubMed:15084260, PubMed:16751106). Translocates to the nucleus upon oxidative stress and in the absence of survival factors (PubMed:10102273, PubMed:16751106). Translocates from the cytosol to the nucleus following dephosphorylation in response to autophagy-inducing stimuli (By similarity). Translocates in a AMPK-dependent manner into the mitochondrion in response to metabolic stress (PubMed:23283301, PubMed:29445193). Serum deprivation increases localization to the nucleus, leading to activate expression of SOX9 and subsequent chondrogenesis (By similarity).</text>
</comment>
<comment type="alternative products">
    <event type="alternative splicing"/>
    <isoform>
        <id>O43524-1</id>
        <name>1</name>
        <sequence type="displayed"/>
    </isoform>
    <isoform>
        <id>O43524-2</id>
        <name>2</name>
        <sequence type="described" ref="VSP_056225"/>
    </isoform>
</comment>
<comment type="tissue specificity">
    <text evidence="21">Ubiquitous.</text>
</comment>
<comment type="PTM">
    <text evidence="1 4 5 6 7 8 10 12 19 20">In the presence of survival factors such as IGF1, phosphorylated on Thr-32 and Ser-253 by AKT1/PKB (PubMed:10102273). This phosphorylated form then interacts with 14-3-3 proteins and is retained in the cytoplasm (PubMed:10102273). Survival factor withdrawal induces dephosphorylation and promotes translocation to the nucleus where the dephosphorylated protein induces transcription of target genes and triggers apoptosis (PubMed:10102273). Although AKT1/PKB doesn't appear to phosphorylate Ser-315 directly, it may activate other kinases that trigger phosphorylation at this residue (PubMed:10102273, PubMed:11154281). Phosphorylated by STK4/MST1 on Ser-209 upon oxidative stress, which leads to dissociation from YWHAB/14-3-3-beta and nuclear translocation (PubMed:16751106). Phosphorylated by PIM1 (PubMed:18593906). Phosphorylation by AMPK leads to the activation of transcriptional activity without affecting subcellular localization (PubMed:17711846). In response to metabolic stress, phosphorylated by AMPK on Ser-30 which mediates FOXO3 mitochondrial translocation (PubMed:29445193). Phosphorylation by MAPKAPK5 promotes nuclear localization and DNA-binding, leading to induction of miR-34b and miR-34c expression, 2 post-transcriptional regulators of MYC that bind to the 3'UTR of MYC transcript and prevent its translation (PubMed:21329882). Phosphorylated by CHUK/IKKA and IKBKB/IKKB (PubMed:15084260). TNF-induced inactivation of FOXO3 requires its phosphorylation at Ser-644 by IKBKB/IKKB which promotes FOXO3 retention in the cytoplasm, polyubiquitination and ubiquitin-mediated proteasomal degradation (PubMed:15084260). May be dephosphorylated by calcineurin A on Ser-299 which abolishes FOXO3 transcriptional activity (By similarity). In cancer cells, ERK mediated-phosphorylation of Ser-12 is required for mitochondrial translocation of FOXO3 in response to metabolic stress or chemotherapeutic agents (PubMed:29445193). Phosphorylation at Ser-253 promotes its degradation by the proteasome (PubMed:30513302). Dephosphorylation at Ser-253 by protein phosphatase 2A (PPP2CA) promotes its stabilization; interaction with PPP2CA is enhanced by AMBRA1 (PubMed:30513302).</text>
</comment>
<comment type="PTM">
    <text evidence="1 13 17">Deacetylation by SIRT1 or SIRT2 stimulates interaction of FOXO3 with SKP2 and facilitates SCF(SKP2)-mediated FOXO3 ubiquitination and proteasomal degradation (PubMed:21841822). Deacetylation by SIRT2 stimulates FOXO3-mediated transcriptional activity in response to oxidative stress (By similarity). Deacetylated by SIRT3 (PubMed:23283301). Deacetylation by SIRT3 stimulates FOXO3-mediated mtDNA transcriptional activity in response to metabolic stress (PubMed:23283301).</text>
</comment>
<comment type="PTM">
    <text evidence="16">Heavily methylated by SET9 which decreases stability, while moderately increasing transcriptional activity. The main methylation site is Lys-271. Methylation doesn't affect subcellular location.</text>
</comment>
<comment type="PTM">
    <text evidence="13">Polyubiquitinated. Ubiquitinated by a SCF complex containing SKP2, leading to proteasomal degradation.</text>
</comment>
<comment type="PTM">
    <text evidence="19">The N-terminus is cleaved following import into the mitochondrion.</text>
</comment>
<comment type="disease">
    <text>A chromosomal aberration involving FOXO3 is found in secondary acute leukemias. Translocation t(6;11)(q21;q23) with KMT2A/MLL1.</text>
</comment>
<comment type="online information" name="Atlas of Genetics and Cytogenetics in Oncology and Haematology">
    <link uri="https://atlasgeneticsoncology.org/gene/125/AF6q21"/>
</comment>
<accession>O43524</accession>
<accession>B4DVZ6</accession>
<accession>E1P5E6</accession>
<accession>O15171</accession>
<accession>Q5T2I7</accession>
<accession>Q9BZ04</accession>
<proteinExistence type="evidence at protein level"/>